<accession>P51610</accession>
<accession>Q6P4G5</accession>
<comment type="function">
    <text evidence="1 7 8 9 15 16 17 18 22 30 31 36 38">Transcriptional coregulator (By similarity). Serves as a scaffold protein, bridging interactions between transcription factors, including THAP11 and ZNF143, and transcriptional coregulators (PubMed:26416877). Involved in control of the cell cycle (PubMed:10629049, PubMed:10779346, PubMed:15190068, PubMed:16624878, PubMed:23629655). Also antagonizes transactivation by ZBTB17 and GABP2; represses ZBTB17 activation of the p15(INK4b) promoter and inhibits its ability to recruit p300 (PubMed:10675337, PubMed:12244100). Coactivator for EGR2 and GABP2 (PubMed:12244100, PubMed:14532282). Tethers the chromatin modifying Set1/Ash2 histone H3 'Lys-4' methyltransferase (H3K4me) and Sin3 histone deacetylase (HDAC) complexes (involved in the activation and repression of transcription, respectively) together (PubMed:12670868). Component of a THAP1/THAP3-HCFC1-OGT complex that is required for the regulation of the transcriptional activity of RRM1 (PubMed:20200153). As part of the NSL complex it may be involved in acetylation of nucleosomal histone H4 on several lysine residues (PubMed:20018852). Recruits KMT2E/MLL5 to E2F1 responsive promoters promoting transcriptional activation and thereby facilitates G1 to S phase transition (PubMed:23629655). Modulates expression of homeobox protein PDX1, perhaps acting in concert with transcription factor E2F1, thereby regulating pancreatic beta-cell growth and glucose-stimulated insulin secretion (By similarity). May negatively modulate transcriptional activity of FOXO3 (By similarity).</text>
</comment>
<comment type="function">
    <text evidence="7 23">(Microbial infection) In case of human herpes simplex virus (HSV) infection, HCFC1 forms a multiprotein-DNA complex with the viral transactivator protein VP16 and POU2F1 thereby enabling the transcription of the viral immediate early genes.</text>
</comment>
<comment type="subunit">
    <text evidence="2 7 8 10 11 12 13 14 15 16 17 19 20 21 22 24 25 26 27 29 30 31 32 33 35 36 41 42 45 46">Composed predominantly of six polypeptides ranging from 110 to 150 kDa and a minor 300 kDa polypeptide (PubMed:10920196). The majority of N- and C-terminal cleavage products remain tightly, albeit non-covalently, associated (PubMed:10920196). Interacts with POU2F1, CREB3, ZBTB17, EGR2, E2F4, CREBZF, SP1, GABP2, Sin3 HDAC complex (SIN3A, HDAC1, HDAC2, SUDS3), SAP30, SIN3B and FHL2 (PubMed:10629049, PubMed:10675337, PubMed:10871379, PubMed:10976766, PubMed:10984507, PubMed:12244100, PubMed:12670868, PubMed:14532282, PubMed:15705566, PubMed:16624878, PubMed:9271389, PubMed:9389645). Component of a MLL1 complex, composed of at least the core components KMT2A/MLL1, ASH2L, HCFC1, WDR5 and RBBP5, as well as the facultative components BACC1, CHD8, DPY30, E2F6, HCFC2, HSP70, INO80C, KANSL1, LAS1L, MAX, MCRS1, MEN1, MGA, KAT8, PELP1, PHF20, PRP31, RING2, RUVBL1, RUVBL2, SENP3, TAF1, TAF4, TAF6, TAF7, TAF9 and TEX10 (PubMed:15199122, PubMed:15960975). Component of a THAP1/THAP3-HCFC1-OGT complex that is required for the regulation of the transcriptional activity of RRM1 (PubMed:20200153). Interacts directly with THAP3 (via its HBM) (PubMed:20200153). Interacts (via the Kelch-repeat domain) with THAP1 (via the HBM); the interaction recruits HCHC1 to the RRM1 (PubMed:20200153). Interacts with THAP7 and THAP11 (via the HMB) (PubMed:31905202). Interacts directly with OGT; the interaction, which requires the HCFC1 cleavage site domain, glycosylates and promotes the proteolytic processing of HCFC1, retains OGT in the nucleus and impacts the expression of herpes simplex virus immediate early viral genes (PubMed:12670868, PubMed:21285374, PubMed:23353889). Component of the SET1 complex, at least composed of the catalytic subunit (SETD1A or SETD1B), WDR5, WDR82, RBBP5, ASH2L, CXXC1, HCFC1 and DPY30 (PubMed:17998332, PubMed:18838538). Component of the NSL complex at least composed of MOF/KAT8, KANSL1, KANSL2, KANSL3, MCRS1, PHF20, OGT1/OGT, WDR5 and HCFC1 (PubMed:20018852). Component of a complex at least composed of ZNF335, HCFC1, CCAR2, EMSY, MKI67, RBBP5, ASH2L and WDR5; the complex is formed as a result of interactions between components of a nuclear receptor-mediated transcription complex and a histone methylation complex (PubMed:19131338). Within the complex interacts with ZNF335 (PubMed:19131338). Interacts with TET2 and TET3 (PubMed:23353889). Interacts with HCFC1R1 (PubMed:12235138). Interacts with THAP11 (By similarity). Interacts (via Kelch domain) with KMT2E/MLL5 isoform 3 (via HBM motif) (PubMed:23629655). Interacts with E2F1 (PubMed:23629655). Accessory scaffold component of the polycomb repressive deubiquitinase (PR-DUB) complex, at least composed of BAP1, one of ASXL1, ASXL2 or (probably) ASXL3 and one of MBD5 or MBD6; the PR-DUB core associates with a number of accessory proteins, including FOXK1, FOXK2, KDM1B, HCFC1, YY1 and OGT (PubMed:20805357, PubMed:30664650). Interacts with YY1 (via Gly-rich region); the interaction is direct (PubMed:20805357). Interacts with BAP1 (via HBM-like motif) (PubMed:19188440, PubMed:19815555, PubMed:20805357).</text>
</comment>
<comment type="subunit">
    <text evidence="7 45 46">(Microbial infection) Associates with the VP16-induced complex; binding to HCFC1 activates the viral transcriptional activator VP16 for association with POU2F1, to form a multiprotein-DNA complex responsible for activating transcription of the viral immediate early genes (PubMed:10629049). Interacts with the viral transactivator protein VP16 (PubMed:10629049, PubMed:9271389, PubMed:9389645).</text>
</comment>
<comment type="interaction">
    <interactant intactId="EBI-396176">
        <id>P51610</id>
    </interactant>
    <interactant intactId="EBI-540797">
        <id>Q9UBL3</id>
        <label>ASH2L</label>
    </interactant>
    <organismsDiffer>false</organismsDiffer>
    <experiments>7</experiments>
</comment>
<comment type="interaction">
    <interactant intactId="EBI-396176">
        <id>P51610</id>
    </interactant>
    <interactant intactId="EBI-1791447">
        <id>Q92560</id>
        <label>BAP1</label>
    </interactant>
    <organismsDiffer>false</organismsDiffer>
    <experiments>6</experiments>
</comment>
<comment type="interaction">
    <interactant intactId="EBI-396176">
        <id>P51610</id>
    </interactant>
    <interactant intactId="EBI-625002">
        <id>O43889</id>
        <label>CREB3</label>
    </interactant>
    <organismsDiffer>false</organismsDiffer>
    <experiments>7</experiments>
</comment>
<comment type="interaction">
    <interactant intactId="EBI-396176">
        <id>P51610</id>
    </interactant>
    <interactant intactId="EBI-625022">
        <id>O43889-2</id>
        <label>CREB3</label>
    </interactant>
    <organismsDiffer>false</organismsDiffer>
    <experiments>4</experiments>
</comment>
<comment type="interaction">
    <interactant intactId="EBI-396176">
        <id>P51610</id>
    </interactant>
    <interactant intactId="EBI-632965">
        <id>Q9NS37</id>
        <label>CREBZF</label>
    </interactant>
    <organismsDiffer>false</organismsDiffer>
    <experiments>8</experiments>
</comment>
<comment type="interaction">
    <interactant intactId="EBI-396176">
        <id>P51610</id>
    </interactant>
    <interactant intactId="EBI-739985">
        <id>Q9BTC0</id>
        <label>DIDO1</label>
    </interactant>
    <organismsDiffer>false</organismsDiffer>
    <experiments>3</experiments>
</comment>
<comment type="interaction">
    <interactant intactId="EBI-396176">
        <id>P51610</id>
    </interactant>
    <interactant intactId="EBI-1644164">
        <id>O43524</id>
        <label>FOXO3</label>
    </interactant>
    <organismsDiffer>false</organismsDiffer>
    <experiments>2</experiments>
</comment>
<comment type="interaction">
    <interactant intactId="EBI-396176">
        <id>P51610</id>
    </interactant>
    <interactant intactId="EBI-638925">
        <id>Q06546</id>
        <label>GABPA</label>
    </interactant>
    <organismsDiffer>false</organismsDiffer>
    <experiments>2</experiments>
</comment>
<comment type="interaction">
    <interactant intactId="EBI-396176">
        <id>P51610</id>
    </interactant>
    <interactant intactId="EBI-618165">
        <id>Q06547</id>
        <label>GABPB1</label>
    </interactant>
    <organismsDiffer>false</organismsDiffer>
    <experiments>3</experiments>
</comment>
<comment type="interaction">
    <interactant intactId="EBI-396176">
        <id>P51610</id>
    </interactant>
    <interactant intactId="EBI-618189">
        <id>Q06547-2</id>
        <label>GABPB1</label>
    </interactant>
    <organismsDiffer>false</organismsDiffer>
    <experiments>6</experiments>
</comment>
<comment type="interaction">
    <interactant intactId="EBI-396176">
        <id>P51610</id>
    </interactant>
    <interactant intactId="EBI-396176">
        <id>P51610</id>
        <label>HCFC1</label>
    </interactant>
    <organismsDiffer>false</organismsDiffer>
    <experiments>2</experiments>
</comment>
<comment type="interaction">
    <interactant intactId="EBI-396176">
        <id>P51610</id>
    </interactant>
    <interactant intactId="EBI-301834">
        <id>Q13547</id>
        <label>HDAC1</label>
    </interactant>
    <organismsDiffer>false</organismsDiffer>
    <experiments>2</experiments>
</comment>
<comment type="interaction">
    <interactant intactId="EBI-396176">
        <id>P51610</id>
    </interactant>
    <interactant intactId="EBI-301821">
        <id>Q92769</id>
        <label>HDAC2</label>
    </interactant>
    <organismsDiffer>false</organismsDiffer>
    <experiments>2</experiments>
</comment>
<comment type="interaction">
    <interactant intactId="EBI-396176">
        <id>P51610</id>
    </interactant>
    <interactant intactId="EBI-539828">
        <id>O15294</id>
        <label>OGT</label>
    </interactant>
    <organismsDiffer>false</organismsDiffer>
    <experiments>10</experiments>
</comment>
<comment type="interaction">
    <interactant intactId="EBI-396176">
        <id>P51610</id>
    </interactant>
    <interactant intactId="EBI-540779">
        <id>O15047</id>
        <label>SETD1A</label>
    </interactant>
    <organismsDiffer>false</organismsDiffer>
    <experiments>2</experiments>
</comment>
<comment type="interaction">
    <interactant intactId="EBI-396176">
        <id>P51610</id>
    </interactant>
    <interactant intactId="EBI-347218">
        <id>Q96ST3</id>
        <label>SIN3A</label>
    </interactant>
    <organismsDiffer>false</organismsDiffer>
    <experiments>6</experiments>
</comment>
<comment type="interaction">
    <interactant intactId="EBI-396176">
        <id>P51610</id>
    </interactant>
    <interactant intactId="EBI-1802965">
        <id>Q96EB6</id>
        <label>SIRT1</label>
    </interactant>
    <organismsDiffer>false</organismsDiffer>
    <experiments>2</experiments>
</comment>
<comment type="interaction">
    <interactant intactId="EBI-396176">
        <id>P51610</id>
    </interactant>
    <interactant intactId="EBI-298336">
        <id>P08047</id>
        <label>SP1</label>
    </interactant>
    <organismsDiffer>false</organismsDiffer>
    <experiments>4</experiments>
</comment>
<comment type="interaction">
    <interactant intactId="EBI-396176">
        <id>P51610</id>
    </interactant>
    <interactant intactId="EBI-540496">
        <id>Q9H7L9</id>
        <label>SUDS3</label>
    </interactant>
    <organismsDiffer>false</organismsDiffer>
    <experiments>2</experiments>
</comment>
<comment type="interaction">
    <interactant intactId="EBI-396176">
        <id>P51610</id>
    </interactant>
    <interactant intactId="EBI-741515">
        <id>Q9NVV9</id>
        <label>THAP1</label>
    </interactant>
    <organismsDiffer>false</organismsDiffer>
    <experiments>6</experiments>
</comment>
<comment type="interaction">
    <interactant intactId="EBI-396176">
        <id>P51610</id>
    </interactant>
    <interactant intactId="EBI-1790529">
        <id>Q96EK4</id>
        <label>THAP11</label>
    </interactant>
    <organismsDiffer>false</organismsDiffer>
    <experiments>4</experiments>
</comment>
<comment type="interaction">
    <interactant intactId="EBI-396176">
        <id>P51610</id>
    </interactant>
    <interactant intactId="EBI-540834">
        <id>P61964</id>
        <label>WDR5</label>
    </interactant>
    <organismsDiffer>false</organismsDiffer>
    <experiments>6</experiments>
</comment>
<comment type="interaction">
    <interactant intactId="EBI-396176">
        <id>P51610</id>
    </interactant>
    <interactant intactId="EBI-372156">
        <id>Q13105</id>
        <label>ZBTB17</label>
    </interactant>
    <organismsDiffer>false</organismsDiffer>
    <experiments>9</experiments>
</comment>
<comment type="interaction">
    <interactant intactId="EBI-396188">
        <id>P51610-1</id>
    </interactant>
    <interactant intactId="EBI-701903">
        <id>Q14192</id>
        <label>FHL2</label>
    </interactant>
    <organismsDiffer>false</organismsDiffer>
    <experiments>5</experiments>
</comment>
<comment type="interaction">
    <interactant intactId="EBI-396188">
        <id>P51610-1</id>
    </interactant>
    <interactant intactId="EBI-6601215">
        <id>Q9UPP1-2</id>
        <label>PHF8</label>
    </interactant>
    <organismsDiffer>false</organismsDiffer>
    <experiments>2</experiments>
</comment>
<comment type="interaction">
    <interactant intactId="EBI-18150048">
        <id>P51610-4</id>
    </interactant>
    <interactant intactId="EBI-632965">
        <id>Q9NS37</id>
        <label>CREBZF</label>
    </interactant>
    <organismsDiffer>false</organismsDiffer>
    <experiments>3</experiments>
</comment>
<comment type="subcellular location">
    <subcellularLocation>
        <location evidence="14">Cytoplasm</location>
    </subcellularLocation>
    <subcellularLocation>
        <location evidence="6 14 27 30 33 36">Nucleus</location>
    </subcellularLocation>
    <text evidence="14">HCFC1R1 modulates its subcellular localization and overexpression of HCFC1R1 leads to accumulation of HCFC1 in the cytoplasm (PubMed:12235138). Non-processed HCFC1 associates with chromatin. Colocalizes with CREB3 and CANX in the ER.</text>
</comment>
<comment type="alternative products">
    <event type="alternative splicing"/>
    <isoform>
        <id>P51610-1</id>
        <name>1</name>
        <sequence type="displayed"/>
    </isoform>
    <isoform>
        <id>P51610-2</id>
        <name>2</name>
        <sequence type="described" ref="VSP_002815"/>
    </isoform>
    <isoform>
        <id>P51610-3</id>
        <name>3</name>
        <sequence type="described" ref="VSP_012984 VSP_012985"/>
    </isoform>
    <isoform>
        <id>P51610-4</id>
        <name>4</name>
        <sequence type="described" ref="VSP_047138"/>
    </isoform>
</comment>
<comment type="tissue specificity">
    <text evidence="46">Highly expressed in fetal tissues and the adult kidney. Present in all tissues tested.</text>
</comment>
<comment type="domain">
    <text evidence="11 43">The HCF repeat is a highly specific proteolytic cleavage signal.</text>
</comment>
<comment type="domain">
    <text evidence="14">The kelch repeats fold into a 6-bladed kelch beta-propeller called the beta-propeller domain which mediates interaction with HCFC1R1.</text>
</comment>
<comment type="PTM">
    <text evidence="11 33 39 40 43">Proteolytically cleaved at one or several PPCE--THET sites within the HCF repeats (PubMed:10920196, PubMed:21285374, PubMed:7590226). Further cleavage of the primary N- and C-terminal chains results in a 'trimming' and accumulation of the smaller chains. Cleavage is promoted by O-glycosylation (PubMed:21285374, PubMed:28302723, PubMed:28584052).</text>
</comment>
<comment type="PTM">
    <text evidence="33 39 40">O-glycosylated. GlcNAcylation by OGT promotes proteolytic processing.</text>
</comment>
<comment type="PTM">
    <text evidence="27 29">Ubiquitinated. Lys-1807 and Lys-1808 are ubiquitinated both via 'Lys-48'- and 'Lys-63'-linked polyubiquitin chains. BAP1 mediated deubiquitination of 'Lys-48'-linked polyubiquitin chains; deubiquitination by BAP1 does not seem to stabilize the protein.</text>
</comment>
<comment type="disease" evidence="34">
    <disease id="DI-03561">
        <name>Methylmalonic aciduria and homocystinuria, cblX type</name>
        <acronym>MAHCX</acronym>
        <description>An X-linked recessive metabolic disorder characterized by severely delayed psychomotor development apparent in infancy, failure to thrive, impaired intellectual development, and intractable epilepsy. Additional features may include microcephaly and choreoathetosis.</description>
        <dbReference type="MIM" id="309541"/>
    </disease>
    <text>The disease is caused by variants affecting the gene represented in this entry.</text>
</comment>
<comment type="miscellaneous">
    <molecule>Isoform 2</molecule>
    <text evidence="53">The N- and the C-terminal fragments fail to associate.</text>
</comment>
<comment type="caution">
    <text evidence="28 37">Was originally thought to be part of the MLL5-L complex, at least composed of KMT2E, STK38, PPP1CA, PPP1CB, PPP1CC, HCFC1, ACTB and OGT (PubMed:19377461). However, the corresponding article has been retracted (PubMed:24336203).</text>
</comment>
<comment type="sequence caution" evidence="53">
    <conflict type="erroneous initiation">
        <sequence resource="EMBL-CDS" id="CAA55790"/>
    </conflict>
    <text>Truncated N-terminus.</text>
</comment>
<name>HCFC1_HUMAN</name>
<evidence type="ECO:0000250" key="1">
    <source>
        <dbReference type="UniProtKB" id="D3ZN95"/>
    </source>
</evidence>
<evidence type="ECO:0000250" key="2">
    <source>
        <dbReference type="UniProtKB" id="Q61191"/>
    </source>
</evidence>
<evidence type="ECO:0000255" key="3"/>
<evidence type="ECO:0000255" key="4">
    <source>
        <dbReference type="PROSITE-ProRule" id="PRU00316"/>
    </source>
</evidence>
<evidence type="ECO:0000256" key="5">
    <source>
        <dbReference type="SAM" id="MobiDB-lite"/>
    </source>
</evidence>
<evidence type="ECO:0000269" key="6">
    <source>
    </source>
</evidence>
<evidence type="ECO:0000269" key="7">
    <source>
    </source>
</evidence>
<evidence type="ECO:0000269" key="8">
    <source>
    </source>
</evidence>
<evidence type="ECO:0000269" key="9">
    <source>
    </source>
</evidence>
<evidence type="ECO:0000269" key="10">
    <source>
    </source>
</evidence>
<evidence type="ECO:0000269" key="11">
    <source>
    </source>
</evidence>
<evidence type="ECO:0000269" key="12">
    <source>
    </source>
</evidence>
<evidence type="ECO:0000269" key="13">
    <source>
    </source>
</evidence>
<evidence type="ECO:0000269" key="14">
    <source>
    </source>
</evidence>
<evidence type="ECO:0000269" key="15">
    <source>
    </source>
</evidence>
<evidence type="ECO:0000269" key="16">
    <source>
    </source>
</evidence>
<evidence type="ECO:0000269" key="17">
    <source>
    </source>
</evidence>
<evidence type="ECO:0000269" key="18">
    <source>
    </source>
</evidence>
<evidence type="ECO:0000269" key="19">
    <source>
    </source>
</evidence>
<evidence type="ECO:0000269" key="20">
    <source>
    </source>
</evidence>
<evidence type="ECO:0000269" key="21">
    <source>
    </source>
</evidence>
<evidence type="ECO:0000269" key="22">
    <source>
    </source>
</evidence>
<evidence type="ECO:0000269" key="23">
    <source>
    </source>
</evidence>
<evidence type="ECO:0000269" key="24">
    <source>
    </source>
</evidence>
<evidence type="ECO:0000269" key="25">
    <source>
    </source>
</evidence>
<evidence type="ECO:0000269" key="26">
    <source>
    </source>
</evidence>
<evidence type="ECO:0000269" key="27">
    <source>
    </source>
</evidence>
<evidence type="ECO:0000269" key="28">
    <source>
    </source>
</evidence>
<evidence type="ECO:0000269" key="29">
    <source>
    </source>
</evidence>
<evidence type="ECO:0000269" key="30">
    <source>
    </source>
</evidence>
<evidence type="ECO:0000269" key="31">
    <source>
    </source>
</evidence>
<evidence type="ECO:0000269" key="32">
    <source>
    </source>
</evidence>
<evidence type="ECO:0000269" key="33">
    <source>
    </source>
</evidence>
<evidence type="ECO:0000269" key="34">
    <source>
    </source>
</evidence>
<evidence type="ECO:0000269" key="35">
    <source>
    </source>
</evidence>
<evidence type="ECO:0000269" key="36">
    <source>
    </source>
</evidence>
<evidence type="ECO:0000269" key="37">
    <source>
    </source>
</evidence>
<evidence type="ECO:0000269" key="38">
    <source>
    </source>
</evidence>
<evidence type="ECO:0000269" key="39">
    <source>
    </source>
</evidence>
<evidence type="ECO:0000269" key="40">
    <source>
    </source>
</evidence>
<evidence type="ECO:0000269" key="41">
    <source>
    </source>
</evidence>
<evidence type="ECO:0000269" key="42">
    <source>
    </source>
</evidence>
<evidence type="ECO:0000269" key="43">
    <source>
    </source>
</evidence>
<evidence type="ECO:0000269" key="44">
    <source>
    </source>
</evidence>
<evidence type="ECO:0000269" key="45">
    <source>
    </source>
</evidence>
<evidence type="ECO:0000269" key="46">
    <source>
    </source>
</evidence>
<evidence type="ECO:0000303" key="47">
    <source>
    </source>
</evidence>
<evidence type="ECO:0000303" key="48">
    <source>
    </source>
</evidence>
<evidence type="ECO:0000303" key="49">
    <source>
    </source>
</evidence>
<evidence type="ECO:0000303" key="50">
    <source>
    </source>
</evidence>
<evidence type="ECO:0000303" key="51">
    <source>
    </source>
</evidence>
<evidence type="ECO:0000303" key="52">
    <source>
    </source>
</evidence>
<evidence type="ECO:0000305" key="53"/>
<evidence type="ECO:0000305" key="54">
    <source>
    </source>
</evidence>
<evidence type="ECO:0000312" key="55">
    <source>
        <dbReference type="HGNC" id="HGNC:4839"/>
    </source>
</evidence>
<evidence type="ECO:0007744" key="56">
    <source>
    </source>
</evidence>
<evidence type="ECO:0007744" key="57">
    <source>
    </source>
</evidence>
<evidence type="ECO:0007744" key="58">
    <source>
    </source>
</evidence>
<evidence type="ECO:0007744" key="59">
    <source>
    </source>
</evidence>
<evidence type="ECO:0007744" key="60">
    <source>
    </source>
</evidence>
<evidence type="ECO:0007744" key="61">
    <source>
    </source>
</evidence>
<evidence type="ECO:0007744" key="62">
    <source>
    </source>
</evidence>
<evidence type="ECO:0007744" key="63">
    <source>
    </source>
</evidence>
<evidence type="ECO:0007744" key="64">
    <source>
    </source>
</evidence>
<evidence type="ECO:0007744" key="65">
    <source>
    </source>
</evidence>
<evidence type="ECO:0007744" key="66">
    <source>
    </source>
</evidence>
<evidence type="ECO:0007744" key="67">
    <source>
    </source>
</evidence>
<evidence type="ECO:0007744" key="68">
    <source>
    </source>
</evidence>
<evidence type="ECO:0007744" key="69">
    <source>
    </source>
</evidence>
<evidence type="ECO:0007829" key="70">
    <source>
        <dbReference type="PDB" id="4GO6"/>
    </source>
</evidence>
<dbReference type="EMBL" id="L20010">
    <property type="status" value="NOT_ANNOTATED_CDS"/>
    <property type="molecule type" value="mRNA"/>
</dbReference>
<dbReference type="EMBL" id="U52112">
    <property type="status" value="NOT_ANNOTATED_CDS"/>
    <property type="molecule type" value="Genomic_DNA"/>
</dbReference>
<dbReference type="EMBL" id="BC063435">
    <property type="protein sequence ID" value="AAH63435.1"/>
    <property type="molecule type" value="mRNA"/>
</dbReference>
<dbReference type="EMBL" id="X79198">
    <property type="protein sequence ID" value="CAA55790.1"/>
    <property type="status" value="ALT_INIT"/>
    <property type="molecule type" value="Genomic_DNA"/>
</dbReference>
<dbReference type="CCDS" id="CCDS44020.1">
    <molecule id="P51610-1"/>
</dbReference>
<dbReference type="PIR" id="A40718">
    <property type="entry name" value="A40718"/>
</dbReference>
<dbReference type="RefSeq" id="NP_005325.2">
    <molecule id="P51610-1"/>
    <property type="nucleotide sequence ID" value="NM_005334.3"/>
</dbReference>
<dbReference type="RefSeq" id="XP_006724879.1">
    <molecule id="P51610-4"/>
    <property type="nucleotide sequence ID" value="XM_006724816.4"/>
</dbReference>
<dbReference type="RefSeq" id="XP_054182919.1">
    <molecule id="P51610-4"/>
    <property type="nucleotide sequence ID" value="XM_054326944.1"/>
</dbReference>
<dbReference type="PDB" id="4GO6">
    <property type="method" value="X-ray"/>
    <property type="resolution" value="2.70 A"/>
    <property type="chains" value="A/C=360-402, B/D=1806-2035"/>
</dbReference>
<dbReference type="PDB" id="4N39">
    <property type="method" value="X-ray"/>
    <property type="resolution" value="1.76 A"/>
    <property type="chains" value="B=1082-1097"/>
</dbReference>
<dbReference type="PDB" id="4N3A">
    <property type="method" value="X-ray"/>
    <property type="resolution" value="1.88 A"/>
    <property type="chains" value="B=1072-1097"/>
</dbReference>
<dbReference type="PDB" id="4N3B">
    <property type="method" value="X-ray"/>
    <property type="resolution" value="2.17 A"/>
    <property type="chains" value="B=1072-1097"/>
</dbReference>
<dbReference type="PDB" id="4N3C">
    <property type="method" value="X-ray"/>
    <property type="resolution" value="2.55 A"/>
    <property type="chains" value="B=1072-1097"/>
</dbReference>
<dbReference type="PDB" id="5LWV">
    <property type="method" value="X-ray"/>
    <property type="resolution" value="1.90 A"/>
    <property type="chains" value="A=1078-1095"/>
</dbReference>
<dbReference type="PDB" id="6MA1">
    <property type="method" value="X-ray"/>
    <property type="resolution" value="2.75 A"/>
    <property type="chains" value="B=1082-1097"/>
</dbReference>
<dbReference type="PDB" id="6MA2">
    <property type="method" value="X-ray"/>
    <property type="resolution" value="2.10 A"/>
    <property type="chains" value="B=1082-1097"/>
</dbReference>
<dbReference type="PDB" id="6MA3">
    <property type="method" value="X-ray"/>
    <property type="resolution" value="2.00 A"/>
    <property type="chains" value="B=1082-1097"/>
</dbReference>
<dbReference type="PDB" id="6MA4">
    <property type="method" value="X-ray"/>
    <property type="resolution" value="2.00 A"/>
    <property type="chains" value="B=1082-1097"/>
</dbReference>
<dbReference type="PDB" id="6MA5">
    <property type="method" value="X-ray"/>
    <property type="resolution" value="2.00 A"/>
    <property type="chains" value="B=1082-1097"/>
</dbReference>
<dbReference type="PDBsum" id="4GO6"/>
<dbReference type="PDBsum" id="4N39"/>
<dbReference type="PDBsum" id="4N3A"/>
<dbReference type="PDBsum" id="4N3B"/>
<dbReference type="PDBsum" id="4N3C"/>
<dbReference type="PDBsum" id="5LWV"/>
<dbReference type="PDBsum" id="6MA1"/>
<dbReference type="PDBsum" id="6MA2"/>
<dbReference type="PDBsum" id="6MA3"/>
<dbReference type="PDBsum" id="6MA4"/>
<dbReference type="PDBsum" id="6MA5"/>
<dbReference type="BMRB" id="P51610"/>
<dbReference type="SMR" id="P51610"/>
<dbReference type="BioGRID" id="109304">
    <property type="interactions" value="291"/>
</dbReference>
<dbReference type="ComplexPortal" id="CPX-5850">
    <property type="entry name" value="Histone-lysine N-methyltransferase complex, KMT2A variant"/>
</dbReference>
<dbReference type="ComplexPortal" id="CPX-7062">
    <property type="entry name" value="Histone-lysine N-methyltransferase complex, KMT2B variant"/>
</dbReference>
<dbReference type="ComplexPortal" id="CPX-7110">
    <property type="entry name" value="Histone-lysine N-methyltransferase complex, SET1A variant"/>
</dbReference>
<dbReference type="ComplexPortal" id="CPX-7111">
    <property type="entry name" value="Histone-lysine N-methyltransferase complex, SET1B variant"/>
</dbReference>
<dbReference type="ComplexPortal" id="CPX-809">
    <property type="entry name" value="NSL histone acetyltransferase complex"/>
</dbReference>
<dbReference type="CORUM" id="P51610"/>
<dbReference type="DIP" id="DIP-32955N"/>
<dbReference type="ELM" id="P51610"/>
<dbReference type="FunCoup" id="P51610">
    <property type="interactions" value="2547"/>
</dbReference>
<dbReference type="IntAct" id="P51610">
    <property type="interactions" value="148"/>
</dbReference>
<dbReference type="MINT" id="P51610"/>
<dbReference type="STRING" id="9606.ENSP00000309555"/>
<dbReference type="GlyConnect" id="2879">
    <property type="glycosylation" value="1 O-GlcNAc glycan (30 sites)"/>
</dbReference>
<dbReference type="GlyCosmos" id="P51610">
    <property type="glycosylation" value="170 sites, 2 glycans"/>
</dbReference>
<dbReference type="GlyGen" id="P51610">
    <property type="glycosylation" value="197 sites, 2 O-linked glycans (196 sites)"/>
</dbReference>
<dbReference type="iPTMnet" id="P51610"/>
<dbReference type="MetOSite" id="P51610"/>
<dbReference type="PhosphoSitePlus" id="P51610"/>
<dbReference type="SwissPalm" id="P51610"/>
<dbReference type="BioMuta" id="HCFC1"/>
<dbReference type="DMDM" id="160332311"/>
<dbReference type="jPOST" id="P51610"/>
<dbReference type="MassIVE" id="P51610"/>
<dbReference type="PaxDb" id="9606-ENSP00000309555"/>
<dbReference type="PeptideAtlas" id="P51610"/>
<dbReference type="ProteomicsDB" id="56346">
    <molecule id="P51610-1"/>
</dbReference>
<dbReference type="ProteomicsDB" id="56347">
    <molecule id="P51610-2"/>
</dbReference>
<dbReference type="ProteomicsDB" id="56348">
    <molecule id="P51610-3"/>
</dbReference>
<dbReference type="Pumba" id="P51610"/>
<dbReference type="TopDownProteomics" id="P51610-2">
    <molecule id="P51610-2"/>
</dbReference>
<dbReference type="Antibodypedia" id="7165">
    <property type="antibodies" value="249 antibodies from 33 providers"/>
</dbReference>
<dbReference type="DNASU" id="3054"/>
<dbReference type="Ensembl" id="ENST00000310441.12">
    <molecule id="P51610-1"/>
    <property type="protein sequence ID" value="ENSP00000309555.7"/>
    <property type="gene ID" value="ENSG00000172534.14"/>
</dbReference>
<dbReference type="GeneID" id="3054"/>
<dbReference type="KEGG" id="hsa:3054"/>
<dbReference type="MANE-Select" id="ENST00000310441.12">
    <property type="protein sequence ID" value="ENSP00000309555.7"/>
    <property type="RefSeq nucleotide sequence ID" value="NM_005334.3"/>
    <property type="RefSeq protein sequence ID" value="NP_005325.2"/>
</dbReference>
<dbReference type="UCSC" id="uc004fjp.4">
    <molecule id="P51610-1"/>
    <property type="organism name" value="human"/>
</dbReference>
<dbReference type="AGR" id="HGNC:4839"/>
<dbReference type="CTD" id="3054"/>
<dbReference type="DisGeNET" id="3054"/>
<dbReference type="GeneCards" id="HCFC1"/>
<dbReference type="GeneReviews" id="HCFC1"/>
<dbReference type="HGNC" id="HGNC:4839">
    <property type="gene designation" value="HCFC1"/>
</dbReference>
<dbReference type="HPA" id="ENSG00000172534">
    <property type="expression patterns" value="Low tissue specificity"/>
</dbReference>
<dbReference type="MalaCards" id="HCFC1"/>
<dbReference type="MIM" id="300019">
    <property type="type" value="gene"/>
</dbReference>
<dbReference type="MIM" id="309541">
    <property type="type" value="phenotype"/>
</dbReference>
<dbReference type="neXtProt" id="NX_P51610"/>
<dbReference type="OpenTargets" id="ENSG00000172534"/>
<dbReference type="Orphanet" id="369962">
    <property type="disease" value="Methylmalonic acidemia with homocystinuria, type cblX"/>
</dbReference>
<dbReference type="Orphanet" id="777">
    <property type="disease" value="X-linked non-syndromic intellectual disability"/>
</dbReference>
<dbReference type="PharmGKB" id="PA29215"/>
<dbReference type="VEuPathDB" id="HostDB:ENSG00000172534"/>
<dbReference type="eggNOG" id="KOG4152">
    <property type="taxonomic scope" value="Eukaryota"/>
</dbReference>
<dbReference type="GeneTree" id="ENSGT00940000161383"/>
<dbReference type="HOGENOM" id="CLU_002603_0_0_1"/>
<dbReference type="InParanoid" id="P51610"/>
<dbReference type="OMA" id="PDYGQMK"/>
<dbReference type="OrthoDB" id="10001928at2759"/>
<dbReference type="PAN-GO" id="P51610">
    <property type="GO annotations" value="4 GO annotations based on evolutionary models"/>
</dbReference>
<dbReference type="PhylomeDB" id="P51610"/>
<dbReference type="TreeFam" id="TF314757"/>
<dbReference type="PathwayCommons" id="P51610"/>
<dbReference type="Reactome" id="R-HSA-2151201">
    <property type="pathway name" value="Transcriptional activation of mitochondrial biogenesis"/>
</dbReference>
<dbReference type="Reactome" id="R-HSA-3214847">
    <property type="pathway name" value="HATs acetylate histones"/>
</dbReference>
<dbReference type="Reactome" id="R-HSA-5689603">
    <property type="pathway name" value="UCH proteinases"/>
</dbReference>
<dbReference type="Reactome" id="R-HSA-9772755">
    <property type="pathway name" value="Formation of WDR5-containing histone-modifying complexes"/>
</dbReference>
<dbReference type="SignaLink" id="P51610"/>
<dbReference type="SIGNOR" id="P51610"/>
<dbReference type="BioGRID-ORCS" id="3054">
    <property type="hits" value="433 hits in 790 CRISPR screens"/>
</dbReference>
<dbReference type="ChiTaRS" id="HCFC1">
    <property type="organism name" value="human"/>
</dbReference>
<dbReference type="EvolutionaryTrace" id="P51610"/>
<dbReference type="GeneWiki" id="Host_cell_factor_C1"/>
<dbReference type="GenomeRNAi" id="3054"/>
<dbReference type="Pharos" id="P51610">
    <property type="development level" value="Tbio"/>
</dbReference>
<dbReference type="PRO" id="PR:P51610"/>
<dbReference type="Proteomes" id="UP000005640">
    <property type="component" value="Chromosome X"/>
</dbReference>
<dbReference type="RNAct" id="P51610">
    <property type="molecule type" value="protein"/>
</dbReference>
<dbReference type="Bgee" id="ENSG00000172534">
    <property type="expression patterns" value="Expressed in tendon of biceps brachii and 198 other cell types or tissues"/>
</dbReference>
<dbReference type="ExpressionAtlas" id="P51610">
    <property type="expression patterns" value="baseline and differential"/>
</dbReference>
<dbReference type="GO" id="GO:0005737">
    <property type="term" value="C:cytoplasm"/>
    <property type="evidence" value="ECO:0000314"/>
    <property type="project" value="UniProtKB"/>
</dbReference>
<dbReference type="GO" id="GO:0000123">
    <property type="term" value="C:histone acetyltransferase complex"/>
    <property type="evidence" value="ECO:0000314"/>
    <property type="project" value="UniProtKB"/>
</dbReference>
<dbReference type="GO" id="GO:0035097">
    <property type="term" value="C:histone methyltransferase complex"/>
    <property type="evidence" value="ECO:0000318"/>
    <property type="project" value="GO_Central"/>
</dbReference>
<dbReference type="GO" id="GO:0016020">
    <property type="term" value="C:membrane"/>
    <property type="evidence" value="ECO:0007005"/>
    <property type="project" value="UniProtKB"/>
</dbReference>
<dbReference type="GO" id="GO:0071339">
    <property type="term" value="C:MLL1 complex"/>
    <property type="evidence" value="ECO:0000314"/>
    <property type="project" value="UniProtKB"/>
</dbReference>
<dbReference type="GO" id="GO:0044665">
    <property type="term" value="C:MLL1/2 complex"/>
    <property type="evidence" value="ECO:0000353"/>
    <property type="project" value="ComplexPortal"/>
</dbReference>
<dbReference type="GO" id="GO:0043025">
    <property type="term" value="C:neuronal cell body"/>
    <property type="evidence" value="ECO:0000314"/>
    <property type="project" value="UniProtKB"/>
</dbReference>
<dbReference type="GO" id="GO:0044545">
    <property type="term" value="C:NSL complex"/>
    <property type="evidence" value="ECO:0000314"/>
    <property type="project" value="ComplexPortal"/>
</dbReference>
<dbReference type="GO" id="GO:0005654">
    <property type="term" value="C:nucleoplasm"/>
    <property type="evidence" value="ECO:0000314"/>
    <property type="project" value="HPA"/>
</dbReference>
<dbReference type="GO" id="GO:0005634">
    <property type="term" value="C:nucleus"/>
    <property type="evidence" value="ECO:0000314"/>
    <property type="project" value="UniProtKB"/>
</dbReference>
<dbReference type="GO" id="GO:0032991">
    <property type="term" value="C:protein-containing complex"/>
    <property type="evidence" value="ECO:0000314"/>
    <property type="project" value="UniProtKB"/>
</dbReference>
<dbReference type="GO" id="GO:0048188">
    <property type="term" value="C:Set1C/COMPASS complex"/>
    <property type="evidence" value="ECO:0000314"/>
    <property type="project" value="UniProtKB"/>
</dbReference>
<dbReference type="GO" id="GO:0045296">
    <property type="term" value="F:cadherin binding"/>
    <property type="evidence" value="ECO:0007005"/>
    <property type="project" value="BHF-UCL"/>
</dbReference>
<dbReference type="GO" id="GO:0003682">
    <property type="term" value="F:chromatin binding"/>
    <property type="evidence" value="ECO:0000314"/>
    <property type="project" value="UniProtKB"/>
</dbReference>
<dbReference type="GO" id="GO:0031490">
    <property type="term" value="F:chromatin DNA binding"/>
    <property type="evidence" value="ECO:0007669"/>
    <property type="project" value="Ensembl"/>
</dbReference>
<dbReference type="GO" id="GO:0140297">
    <property type="term" value="F:DNA-binding transcription factor binding"/>
    <property type="evidence" value="ECO:0000353"/>
    <property type="project" value="UniProtKB"/>
</dbReference>
<dbReference type="GO" id="GO:0042802">
    <property type="term" value="F:identical protein binding"/>
    <property type="evidence" value="ECO:0000353"/>
    <property type="project" value="IntAct"/>
</dbReference>
<dbReference type="GO" id="GO:0030674">
    <property type="term" value="F:protein-macromolecule adaptor activity"/>
    <property type="evidence" value="ECO:0000353"/>
    <property type="project" value="UniProtKB"/>
</dbReference>
<dbReference type="GO" id="GO:0000978">
    <property type="term" value="F:RNA polymerase II cis-regulatory region sequence-specific DNA binding"/>
    <property type="evidence" value="ECO:0007669"/>
    <property type="project" value="Ensembl"/>
</dbReference>
<dbReference type="GO" id="GO:0003713">
    <property type="term" value="F:transcription coactivator activity"/>
    <property type="evidence" value="ECO:0000315"/>
    <property type="project" value="UniProtKB"/>
</dbReference>
<dbReference type="GO" id="GO:0001835">
    <property type="term" value="P:blastocyst hatching"/>
    <property type="evidence" value="ECO:0007669"/>
    <property type="project" value="Ensembl"/>
</dbReference>
<dbReference type="GO" id="GO:0006338">
    <property type="term" value="P:chromatin remodeling"/>
    <property type="evidence" value="ECO:0000318"/>
    <property type="project" value="GO_Central"/>
</dbReference>
<dbReference type="GO" id="GO:0000122">
    <property type="term" value="P:negative regulation of transcription by RNA polymerase II"/>
    <property type="evidence" value="ECO:0000250"/>
    <property type="project" value="UniProtKB"/>
</dbReference>
<dbReference type="GO" id="GO:0045787">
    <property type="term" value="P:positive regulation of cell cycle"/>
    <property type="evidence" value="ECO:0000304"/>
    <property type="project" value="UniProtKB"/>
</dbReference>
<dbReference type="GO" id="GO:0045893">
    <property type="term" value="P:positive regulation of DNA-templated transcription"/>
    <property type="evidence" value="ECO:0000315"/>
    <property type="project" value="UniProtKB"/>
</dbReference>
<dbReference type="GO" id="GO:0010628">
    <property type="term" value="P:positive regulation of gene expression"/>
    <property type="evidence" value="ECO:0000314"/>
    <property type="project" value="UniProtKB"/>
</dbReference>
<dbReference type="GO" id="GO:0045944">
    <property type="term" value="P:positive regulation of transcription by RNA polymerase II"/>
    <property type="evidence" value="ECO:0000314"/>
    <property type="project" value="ARUK-UCL"/>
</dbReference>
<dbReference type="GO" id="GO:0050821">
    <property type="term" value="P:protein stabilization"/>
    <property type="evidence" value="ECO:0000314"/>
    <property type="project" value="UniProtKB"/>
</dbReference>
<dbReference type="GO" id="GO:0006355">
    <property type="term" value="P:regulation of DNA-templated transcription"/>
    <property type="evidence" value="ECO:0000314"/>
    <property type="project" value="UniProtKB"/>
</dbReference>
<dbReference type="GO" id="GO:0043254">
    <property type="term" value="P:regulation of protein-containing complex assembly"/>
    <property type="evidence" value="ECO:0000314"/>
    <property type="project" value="UniProtKB"/>
</dbReference>
<dbReference type="GO" id="GO:0019046">
    <property type="term" value="P:release from viral latency"/>
    <property type="evidence" value="ECO:0000303"/>
    <property type="project" value="UniProtKB"/>
</dbReference>
<dbReference type="CDD" id="cd00063">
    <property type="entry name" value="FN3"/>
    <property type="match status" value="2"/>
</dbReference>
<dbReference type="FunFam" id="2.60.40.10:FF:000443">
    <property type="entry name" value="host cell factor 1"/>
    <property type="match status" value="1"/>
</dbReference>
<dbReference type="FunFam" id="2.60.40.10:FF:000259">
    <property type="entry name" value="Host cell factor 1 (Predicted)"/>
    <property type="match status" value="1"/>
</dbReference>
<dbReference type="FunFam" id="2.120.10.80:FF:000008">
    <property type="entry name" value="host cell factor 1 isoform X1"/>
    <property type="match status" value="1"/>
</dbReference>
<dbReference type="FunFam" id="2.120.10.80:FF:000015">
    <property type="entry name" value="host cell factor 1 isoform X1"/>
    <property type="match status" value="1"/>
</dbReference>
<dbReference type="Gene3D" id="6.10.250.2590">
    <property type="match status" value="1"/>
</dbReference>
<dbReference type="Gene3D" id="2.60.40.10">
    <property type="entry name" value="Immunoglobulins"/>
    <property type="match status" value="2"/>
</dbReference>
<dbReference type="Gene3D" id="2.120.10.80">
    <property type="entry name" value="Kelch-type beta propeller"/>
    <property type="match status" value="2"/>
</dbReference>
<dbReference type="InterPro" id="IPR003961">
    <property type="entry name" value="FN3_dom"/>
</dbReference>
<dbReference type="InterPro" id="IPR036116">
    <property type="entry name" value="FN3_sf"/>
</dbReference>
<dbReference type="InterPro" id="IPR043536">
    <property type="entry name" value="HCF1/2"/>
</dbReference>
<dbReference type="InterPro" id="IPR013783">
    <property type="entry name" value="Ig-like_fold"/>
</dbReference>
<dbReference type="InterPro" id="IPR015915">
    <property type="entry name" value="Kelch-typ_b-propeller"/>
</dbReference>
<dbReference type="PANTHER" id="PTHR46003">
    <property type="entry name" value="HOST CELL FACTOR"/>
    <property type="match status" value="1"/>
</dbReference>
<dbReference type="PANTHER" id="PTHR46003:SF3">
    <property type="entry name" value="HOST CELL FACTOR 1"/>
    <property type="match status" value="1"/>
</dbReference>
<dbReference type="Pfam" id="PF13854">
    <property type="entry name" value="Kelch_HCF"/>
    <property type="match status" value="1"/>
</dbReference>
<dbReference type="SMART" id="SM00060">
    <property type="entry name" value="FN3"/>
    <property type="match status" value="3"/>
</dbReference>
<dbReference type="SUPFAM" id="SSF49265">
    <property type="entry name" value="Fibronectin type III"/>
    <property type="match status" value="1"/>
</dbReference>
<dbReference type="SUPFAM" id="SSF117281">
    <property type="entry name" value="Kelch motif"/>
    <property type="match status" value="2"/>
</dbReference>
<dbReference type="PROSITE" id="PS50853">
    <property type="entry name" value="FN3"/>
    <property type="match status" value="3"/>
</dbReference>
<protein>
    <recommendedName>
        <fullName evidence="47">Host cell factor 1</fullName>
        <shortName evidence="52">HCF</shortName>
        <shortName evidence="47">HCF-1</shortName>
    </recommendedName>
    <alternativeName>
        <fullName evidence="51">C1 factor</fullName>
    </alternativeName>
    <alternativeName>
        <fullName evidence="53">CFF</fullName>
    </alternativeName>
    <alternativeName>
        <fullName evidence="53">VCAF</fullName>
    </alternativeName>
    <alternativeName>
        <fullName evidence="50">VP16 accessory protein</fullName>
    </alternativeName>
    <component>
        <recommendedName>
            <fullName evidence="49">HCF N-terminal chain 1</fullName>
        </recommendedName>
    </component>
    <component>
        <recommendedName>
            <fullName evidence="49">HCF N-terminal chain 2</fullName>
        </recommendedName>
    </component>
    <component>
        <recommendedName>
            <fullName evidence="49">HCF N-terminal chain 3</fullName>
        </recommendedName>
    </component>
    <component>
        <recommendedName>
            <fullName evidence="49">HCF N-terminal chain 4</fullName>
        </recommendedName>
    </component>
    <component>
        <recommendedName>
            <fullName evidence="49">HCF N-terminal chain 5</fullName>
        </recommendedName>
    </component>
    <component>
        <recommendedName>
            <fullName evidence="49">HCF N-terminal chain 6</fullName>
        </recommendedName>
    </component>
    <component>
        <recommendedName>
            <fullName evidence="49">HCF C-terminal chain 1</fullName>
        </recommendedName>
    </component>
    <component>
        <recommendedName>
            <fullName evidence="49">HCF C-terminal chain 2</fullName>
        </recommendedName>
    </component>
    <component>
        <recommendedName>
            <fullName evidence="49">HCF C-terminal chain 3</fullName>
        </recommendedName>
    </component>
    <component>
        <recommendedName>
            <fullName evidence="49">HCF C-terminal chain 4</fullName>
        </recommendedName>
    </component>
    <component>
        <recommendedName>
            <fullName evidence="49">HCF C-terminal chain 5</fullName>
        </recommendedName>
    </component>
    <component>
        <recommendedName>
            <fullName evidence="49">HCF C-terminal chain 6</fullName>
        </recommendedName>
    </component>
</protein>
<proteinExistence type="evidence at protein level"/>
<reference key="1">
    <citation type="journal article" date="1993" name="Cell">
        <title>The VP16 accessory protein HCF is a family of polypeptides processed from a large precursor protein.</title>
        <authorList>
            <person name="Wilson A.C."/>
            <person name="Lamarco K."/>
            <person name="Peterson M.G."/>
            <person name="Herr W."/>
        </authorList>
    </citation>
    <scope>NUCLEOTIDE SEQUENCE [MRNA] (ISOFORMS 1 AND 2)</scope>
    <scope>PARTIAL PROTEIN SEQUENCE</scope>
    <source>
        <tissue>Hepatoma</tissue>
    </source>
</reference>
<reference key="2">
    <citation type="journal article" date="1995" name="J. Biol. Chem.">
        <title>The cellular C1 factor of the herpes simplex virus enhancer complex is a family of polypeptides.</title>
        <authorList>
            <person name="Kristie T.M."/>
            <person name="Pomerantz J.L."/>
            <person name="Twomey T.C."/>
            <person name="Parent S.A."/>
            <person name="Sharp P.A."/>
        </authorList>
    </citation>
    <scope>NUCLEOTIDE SEQUENCE [MRNA] (ISOFORM 1)</scope>
</reference>
<reference key="3">
    <citation type="journal article" date="2005" name="Nature">
        <title>The DNA sequence of the human X chromosome.</title>
        <authorList>
            <person name="Ross M.T."/>
            <person name="Grafham D.V."/>
            <person name="Coffey A.J."/>
            <person name="Scherer S."/>
            <person name="McLay K."/>
            <person name="Muzny D."/>
            <person name="Platzer M."/>
            <person name="Howell G.R."/>
            <person name="Burrows C."/>
            <person name="Bird C.P."/>
            <person name="Frankish A."/>
            <person name="Lovell F.L."/>
            <person name="Howe K.L."/>
            <person name="Ashurst J.L."/>
            <person name="Fulton R.S."/>
            <person name="Sudbrak R."/>
            <person name="Wen G."/>
            <person name="Jones M.C."/>
            <person name="Hurles M.E."/>
            <person name="Andrews T.D."/>
            <person name="Scott C.E."/>
            <person name="Searle S."/>
            <person name="Ramser J."/>
            <person name="Whittaker A."/>
            <person name="Deadman R."/>
            <person name="Carter N.P."/>
            <person name="Hunt S.E."/>
            <person name="Chen R."/>
            <person name="Cree A."/>
            <person name="Gunaratne P."/>
            <person name="Havlak P."/>
            <person name="Hodgson A."/>
            <person name="Metzker M.L."/>
            <person name="Richards S."/>
            <person name="Scott G."/>
            <person name="Steffen D."/>
            <person name="Sodergren E."/>
            <person name="Wheeler D.A."/>
            <person name="Worley K.C."/>
            <person name="Ainscough R."/>
            <person name="Ambrose K.D."/>
            <person name="Ansari-Lari M.A."/>
            <person name="Aradhya S."/>
            <person name="Ashwell R.I."/>
            <person name="Babbage A.K."/>
            <person name="Bagguley C.L."/>
            <person name="Ballabio A."/>
            <person name="Banerjee R."/>
            <person name="Barker G.E."/>
            <person name="Barlow K.F."/>
            <person name="Barrett I.P."/>
            <person name="Bates K.N."/>
            <person name="Beare D.M."/>
            <person name="Beasley H."/>
            <person name="Beasley O."/>
            <person name="Beck A."/>
            <person name="Bethel G."/>
            <person name="Blechschmidt K."/>
            <person name="Brady N."/>
            <person name="Bray-Allen S."/>
            <person name="Bridgeman A.M."/>
            <person name="Brown A.J."/>
            <person name="Brown M.J."/>
            <person name="Bonnin D."/>
            <person name="Bruford E.A."/>
            <person name="Buhay C."/>
            <person name="Burch P."/>
            <person name="Burford D."/>
            <person name="Burgess J."/>
            <person name="Burrill W."/>
            <person name="Burton J."/>
            <person name="Bye J.M."/>
            <person name="Carder C."/>
            <person name="Carrel L."/>
            <person name="Chako J."/>
            <person name="Chapman J.C."/>
            <person name="Chavez D."/>
            <person name="Chen E."/>
            <person name="Chen G."/>
            <person name="Chen Y."/>
            <person name="Chen Z."/>
            <person name="Chinault C."/>
            <person name="Ciccodicola A."/>
            <person name="Clark S.Y."/>
            <person name="Clarke G."/>
            <person name="Clee C.M."/>
            <person name="Clegg S."/>
            <person name="Clerc-Blankenburg K."/>
            <person name="Clifford K."/>
            <person name="Cobley V."/>
            <person name="Cole C.G."/>
            <person name="Conquer J.S."/>
            <person name="Corby N."/>
            <person name="Connor R.E."/>
            <person name="David R."/>
            <person name="Davies J."/>
            <person name="Davis C."/>
            <person name="Davis J."/>
            <person name="Delgado O."/>
            <person name="Deshazo D."/>
            <person name="Dhami P."/>
            <person name="Ding Y."/>
            <person name="Dinh H."/>
            <person name="Dodsworth S."/>
            <person name="Draper H."/>
            <person name="Dugan-Rocha S."/>
            <person name="Dunham A."/>
            <person name="Dunn M."/>
            <person name="Durbin K.J."/>
            <person name="Dutta I."/>
            <person name="Eades T."/>
            <person name="Ellwood M."/>
            <person name="Emery-Cohen A."/>
            <person name="Errington H."/>
            <person name="Evans K.L."/>
            <person name="Faulkner L."/>
            <person name="Francis F."/>
            <person name="Frankland J."/>
            <person name="Fraser A.E."/>
            <person name="Galgoczy P."/>
            <person name="Gilbert J."/>
            <person name="Gill R."/>
            <person name="Gloeckner G."/>
            <person name="Gregory S.G."/>
            <person name="Gribble S."/>
            <person name="Griffiths C."/>
            <person name="Grocock R."/>
            <person name="Gu Y."/>
            <person name="Gwilliam R."/>
            <person name="Hamilton C."/>
            <person name="Hart E.A."/>
            <person name="Hawes A."/>
            <person name="Heath P.D."/>
            <person name="Heitmann K."/>
            <person name="Hennig S."/>
            <person name="Hernandez J."/>
            <person name="Hinzmann B."/>
            <person name="Ho S."/>
            <person name="Hoffs M."/>
            <person name="Howden P.J."/>
            <person name="Huckle E.J."/>
            <person name="Hume J."/>
            <person name="Hunt P.J."/>
            <person name="Hunt A.R."/>
            <person name="Isherwood J."/>
            <person name="Jacob L."/>
            <person name="Johnson D."/>
            <person name="Jones S."/>
            <person name="de Jong P.J."/>
            <person name="Joseph S.S."/>
            <person name="Keenan S."/>
            <person name="Kelly S."/>
            <person name="Kershaw J.K."/>
            <person name="Khan Z."/>
            <person name="Kioschis P."/>
            <person name="Klages S."/>
            <person name="Knights A.J."/>
            <person name="Kosiura A."/>
            <person name="Kovar-Smith C."/>
            <person name="Laird G.K."/>
            <person name="Langford C."/>
            <person name="Lawlor S."/>
            <person name="Leversha M."/>
            <person name="Lewis L."/>
            <person name="Liu W."/>
            <person name="Lloyd C."/>
            <person name="Lloyd D.M."/>
            <person name="Loulseged H."/>
            <person name="Loveland J.E."/>
            <person name="Lovell J.D."/>
            <person name="Lozado R."/>
            <person name="Lu J."/>
            <person name="Lyne R."/>
            <person name="Ma J."/>
            <person name="Maheshwari M."/>
            <person name="Matthews L.H."/>
            <person name="McDowall J."/>
            <person name="McLaren S."/>
            <person name="McMurray A."/>
            <person name="Meidl P."/>
            <person name="Meitinger T."/>
            <person name="Milne S."/>
            <person name="Miner G."/>
            <person name="Mistry S.L."/>
            <person name="Morgan M."/>
            <person name="Morris S."/>
            <person name="Mueller I."/>
            <person name="Mullikin J.C."/>
            <person name="Nguyen N."/>
            <person name="Nordsiek G."/>
            <person name="Nyakatura G."/>
            <person name="O'dell C.N."/>
            <person name="Okwuonu G."/>
            <person name="Palmer S."/>
            <person name="Pandian R."/>
            <person name="Parker D."/>
            <person name="Parrish J."/>
            <person name="Pasternak S."/>
            <person name="Patel D."/>
            <person name="Pearce A.V."/>
            <person name="Pearson D.M."/>
            <person name="Pelan S.E."/>
            <person name="Perez L."/>
            <person name="Porter K.M."/>
            <person name="Ramsey Y."/>
            <person name="Reichwald K."/>
            <person name="Rhodes S."/>
            <person name="Ridler K.A."/>
            <person name="Schlessinger D."/>
            <person name="Schueler M.G."/>
            <person name="Sehra H.K."/>
            <person name="Shaw-Smith C."/>
            <person name="Shen H."/>
            <person name="Sheridan E.M."/>
            <person name="Shownkeen R."/>
            <person name="Skuce C.D."/>
            <person name="Smith M.L."/>
            <person name="Sotheran E.C."/>
            <person name="Steingruber H.E."/>
            <person name="Steward C.A."/>
            <person name="Storey R."/>
            <person name="Swann R.M."/>
            <person name="Swarbreck D."/>
            <person name="Tabor P.E."/>
            <person name="Taudien S."/>
            <person name="Taylor T."/>
            <person name="Teague B."/>
            <person name="Thomas K."/>
            <person name="Thorpe A."/>
            <person name="Timms K."/>
            <person name="Tracey A."/>
            <person name="Trevanion S."/>
            <person name="Tromans A.C."/>
            <person name="d'Urso M."/>
            <person name="Verduzco D."/>
            <person name="Villasana D."/>
            <person name="Waldron L."/>
            <person name="Wall M."/>
            <person name="Wang Q."/>
            <person name="Warren J."/>
            <person name="Warry G.L."/>
            <person name="Wei X."/>
            <person name="West A."/>
            <person name="Whitehead S.L."/>
            <person name="Whiteley M.N."/>
            <person name="Wilkinson J.E."/>
            <person name="Willey D.L."/>
            <person name="Williams G."/>
            <person name="Williams L."/>
            <person name="Williamson A."/>
            <person name="Williamson H."/>
            <person name="Wilming L."/>
            <person name="Woodmansey R.L."/>
            <person name="Wray P.W."/>
            <person name="Yen J."/>
            <person name="Zhang J."/>
            <person name="Zhou J."/>
            <person name="Zoghbi H."/>
            <person name="Zorilla S."/>
            <person name="Buck D."/>
            <person name="Reinhardt R."/>
            <person name="Poustka A."/>
            <person name="Rosenthal A."/>
            <person name="Lehrach H."/>
            <person name="Meindl A."/>
            <person name="Minx P.J."/>
            <person name="Hillier L.W."/>
            <person name="Willard H.F."/>
            <person name="Wilson R.K."/>
            <person name="Waterston R.H."/>
            <person name="Rice C.M."/>
            <person name="Vaudin M."/>
            <person name="Coulson A."/>
            <person name="Nelson D.L."/>
            <person name="Weinstock G."/>
            <person name="Sulston J.E."/>
            <person name="Durbin R.M."/>
            <person name="Hubbard T."/>
            <person name="Gibbs R.A."/>
            <person name="Beck S."/>
            <person name="Rogers J."/>
            <person name="Bentley D.R."/>
        </authorList>
    </citation>
    <scope>NUCLEOTIDE SEQUENCE [LARGE SCALE GENOMIC DNA]</scope>
</reference>
<reference key="4">
    <citation type="journal article" date="2004" name="Genome Res.">
        <title>The status, quality, and expansion of the NIH full-length cDNA project: the Mammalian Gene Collection (MGC).</title>
        <authorList>
            <consortium name="The MGC Project Team"/>
        </authorList>
    </citation>
    <scope>NUCLEOTIDE SEQUENCE [LARGE SCALE MRNA] (ISOFORM 3)</scope>
    <source>
        <tissue>Mammary gland</tissue>
    </source>
</reference>
<reference key="5">
    <citation type="journal article" date="1994" name="Genomics">
        <title>Genomic organization of the human VP16 accessory protein, a housekeeping gene (HCFC1) mapping to Xq28.</title>
        <authorList>
            <person name="Frattini A."/>
            <person name="Faranda S."/>
            <person name="Redolfi E."/>
            <person name="Zucchi I."/>
            <person name="Villa A."/>
            <person name="Patrosso M.C."/>
            <person name="Strina D."/>
            <person name="Susani L."/>
            <person name="Vezzoni P."/>
        </authorList>
    </citation>
    <scope>NUCLEOTIDE SEQUENCE [GENOMIC DNA] OF 65-2035</scope>
    <scope>VARIANT PRO-1164</scope>
    <source>
        <tissue>Fetal brain</tissue>
    </source>
</reference>
<reference key="6">
    <citation type="journal article" date="2000" name="Proc. Natl. Acad. Sci. U.S.A.">
        <title>Autocatalytic proteolysis of the transcription factor-coactivator C1 (HCF): a potential role for proteolytic regulation of coactivator function.</title>
        <authorList>
            <person name="Vogel J.L."/>
            <person name="Kristie T.M."/>
        </authorList>
    </citation>
    <scope>PROTEIN SEQUENCE OF 1324-1336; 1424-1436 AND 1446-1457</scope>
    <scope>SUBUNIT</scope>
    <scope>AUTOCATALYTIC CLEAVAGE</scope>
</reference>
<reference key="7">
    <citation type="journal article" date="1995" name="Genes Dev.">
        <title>The HCF repeat is an unusual proteolytic cleavage signal.</title>
        <authorList>
            <person name="Wilson A.C."/>
            <person name="Peterson M.G."/>
            <person name="Herr W."/>
        </authorList>
    </citation>
    <scope>AUTOCATALYTIC CLEAVAGE</scope>
    <scope>MUTAGENESIS OF 1017-PRO--HIS-1021 AND 1072-VAL--ASN-1097</scope>
</reference>
<reference key="8">
    <citation type="journal article" date="1997" name="Mol. Cell. Biol.">
        <title>Luman, a new member of the CREB/ATF family, binds to herpes simplex virus VP16-associated host cellular factor.</title>
        <authorList>
            <person name="Lu R."/>
            <person name="Yang P."/>
            <person name="O'Hare P."/>
            <person name="Misra V."/>
        </authorList>
    </citation>
    <scope>INTERACTION WITH CREB3 AND VP16</scope>
    <scope>MUTAGENESIS OF PRO-134</scope>
</reference>
<reference key="9">
    <citation type="journal article" date="1997" name="Genes Dev.">
        <title>Viral mimicry: common mode of association with HCF by VP16 and the cellular protein LZIP.</title>
        <authorList>
            <person name="Freiman R.N."/>
            <person name="Herr W."/>
        </authorList>
    </citation>
    <scope>INTERACTION WITH CREB3 AND VP16</scope>
    <scope>TISSUE SPECIFICITY</scope>
    <source>
        <tissue>Cervix carcinoma</tissue>
    </source>
</reference>
<reference key="10">
    <citation type="journal article" date="1999" name="Proc. Natl. Acad. Sci. U.S.A.">
        <title>Nuclear localization of the C1 factor (host cell factor) in sensory neurons correlates with reactivation of herpes simplex virus from latency.</title>
        <authorList>
            <person name="Kristie T.M."/>
            <person name="Vogel J.L."/>
            <person name="Sears A.E."/>
        </authorList>
    </citation>
    <scope>PROTEOLYTIC CLEAVAGE</scope>
</reference>
<reference key="11">
    <citation type="journal article" date="2000" name="EMBO J.">
        <title>The novel coactivator C1 (HCF) coordinates multiprotein enhancer formation and mediates transcription activation by GABP.</title>
        <authorList>
            <person name="Vogel J.L."/>
            <person name="Kristie T.M."/>
        </authorList>
    </citation>
    <scope>FUNCTION</scope>
    <scope>INTERACTION WITH GABP2</scope>
</reference>
<reference key="12">
    <citation type="journal article" date="2000" name="J. Virol.">
        <title>Potential role for luman, the cellular homologue of herpes simplex virus VP16 (alpha gene trans-inducing factor), in herpesvirus latency.</title>
        <authorList>
            <person name="Lu R."/>
            <person name="Misra V."/>
        </authorList>
    </citation>
    <scope>SUBCELLULAR LOCATION</scope>
</reference>
<reference key="13">
    <citation type="journal article" date="2000" name="Mol. Cell. Biochem.">
        <title>A set of proteins interacting with transcription factor Sp1 identified in a two-hybrid screening.</title>
        <authorList>
            <person name="Gunther M."/>
            <person name="Laithier M."/>
            <person name="Brison O."/>
        </authorList>
    </citation>
    <scope>INTERACTION WITH SP1</scope>
</reference>
<reference key="14">
    <citation type="journal article" date="2000" name="Mol. Cell. Biol.">
        <title>Mutations in host cell factor 1 separate its role in cell proliferation from recruitment of VP16 and LZIP.</title>
        <authorList>
            <person name="Mahajan S.S."/>
            <person name="Wilson A.C."/>
        </authorList>
    </citation>
    <scope>FUNCTION</scope>
    <scope>INTERACTION WITH POU2F1; VP16 AND CREB3</scope>
    <scope>MUTAGENESIS OF PRO-30; PRO-79; CYS-82; LYS-105; PRO-134; ARG-137; PRO-197; ARG-200; ARG-228; PRO-252; ARG-255; 289-GLU--LYS-291; PRO-319; ARG-322; SER-338 AND 344-ARG-LYS-345</scope>
</reference>
<reference key="15">
    <citation type="journal article" date="2000" name="Mol. Cell. Biol.">
        <title>A novel 50-kilodalton fragment of host cell factor 1 (C1) in G(0) cells.</title>
        <authorList>
            <person name="Scarr R.B."/>
            <person name="Smith M.R."/>
            <person name="Beddall M."/>
            <person name="Sharp P.A."/>
        </authorList>
    </citation>
    <scope>FUNCTION</scope>
</reference>
<reference key="16">
    <citation type="journal article" date="2000" name="Nucleic Acids Res.">
        <title>Zhangfei: a second cellular protein interacts with herpes simplex virus accessory factor HCF in a manner similar to Luman and VP16.</title>
        <authorList>
            <person name="Lu R."/>
            <person name="Misra V."/>
        </authorList>
    </citation>
    <scope>INTERACTION WITH CREBZF</scope>
</reference>
<reference key="17">
    <citation type="journal article" date="2000" name="Proc. Natl. Acad. Sci. U.S.A.">
        <title>N-terminal transcriptional activation domain of LZIP comprises two LxxLL motifs and the host cell factor-1 binding motif.</title>
        <authorList>
            <person name="Luciano R.L."/>
            <person name="Wilson A.C."/>
        </authorList>
    </citation>
    <scope>INTERACTION WITH CREB3</scope>
</reference>
<reference key="18">
    <citation type="journal article" date="2002" name="J. Biol. Chem.">
        <title>Interaction of HCF-1 with a cellular nuclear export factor.</title>
        <authorList>
            <person name="Mahajan S.S."/>
            <person name="Little M.M."/>
            <person name="Vazquez R."/>
            <person name="Wilson A.C."/>
        </authorList>
    </citation>
    <scope>SUBCELLULAR LOCATION</scope>
    <scope>DOMAIN</scope>
    <scope>INTERACTION WITH HCFC1R1</scope>
    <source>
        <tissue>Brain</tissue>
    </source>
</reference>
<reference key="19">
    <citation type="journal article" date="2002" name="J. Biol. Chem.">
        <title>Host cell factor-1 interacts with and antagonizes transactivation by the cell cycle regulatory factor Miz-1.</title>
        <authorList>
            <person name="Piluso D."/>
            <person name="Bilan P."/>
            <person name="Capone J.P."/>
        </authorList>
    </citation>
    <scope>FUNCTION</scope>
    <scope>INTERACTION WITH ZBTB17</scope>
</reference>
<reference key="20">
    <citation type="journal article" date="2003" name="J. Biol. Chem.">
        <title>HCF-1 functions as a coactivator for the zinc finger protein Krox20.</title>
        <authorList>
            <person name="Luciano R.L."/>
            <person name="Wilson A.C."/>
        </authorList>
    </citation>
    <scope>FUNCTION</scope>
    <scope>INTERACTION WITH EGR2 AND E2F4</scope>
</reference>
<reference key="21">
    <citation type="journal article" date="2003" name="Genes Dev.">
        <title>Human Sin3 deacetylase and trithorax-related Set1/Ash2 histone H3-K4 methyltransferase are tethered together selectively by the cell-proliferation factor HCF-1.</title>
        <authorList>
            <person name="Wysocka J."/>
            <person name="Myers M.P."/>
            <person name="Laherty C.D."/>
            <person name="Eisenman R.N."/>
            <person name="Herr W."/>
        </authorList>
    </citation>
    <scope>FUNCTION</scope>
    <scope>INTERACTION WITH SIN3A; HDAC1; HDAC2; SUDS3; SAP30; SIN3B; OGT; SET1; ASH2L AND WDR5</scope>
</reference>
<reference key="22">
    <citation type="journal article" date="2004" name="J. Biol. Chem.">
        <title>A protein sequestering system reveals control of cellular programs by the transcriptional coactivator HCF-1.</title>
        <authorList>
            <person name="Khurana B."/>
            <person name="Kristie T.M."/>
        </authorList>
    </citation>
    <scope>FUNCTION</scope>
</reference>
<reference key="23">
    <citation type="journal article" date="2004" name="Mol. Cell. Biol.">
        <title>Leukemia proto-oncoprotein MLL forms a SET1-like histone methyltransferase complex with menin to regulate Hox gene expression.</title>
        <authorList>
            <person name="Yokoyama A."/>
            <person name="Wang Z."/>
            <person name="Wysocka J."/>
            <person name="Sanyal M."/>
            <person name="Aufiero D.J."/>
            <person name="Kitabayashi I."/>
            <person name="Herr W."/>
            <person name="Cleary M.L."/>
        </authorList>
    </citation>
    <scope>IDENTIFICATION IN THE MLL1 COMPLEX</scope>
</reference>
<reference key="24">
    <citation type="journal article" date="2005" name="Cell">
        <title>Physical association and coordinate function of the H3 K4 methyltransferase MLL1 and the H4 K16 acetyltransferase MOF.</title>
        <authorList>
            <person name="Dou Y."/>
            <person name="Milne T.A."/>
            <person name="Tackett A.J."/>
            <person name="Smith E.R."/>
            <person name="Fukuda A."/>
            <person name="Wysocka J."/>
            <person name="Allis C.D."/>
            <person name="Chait B.T."/>
            <person name="Hess J.L."/>
            <person name="Roeder R.G."/>
        </authorList>
    </citation>
    <scope>IDENTIFICATION IN THE MLL1 COMPLEX</scope>
</reference>
<reference key="25">
    <citation type="journal article" date="2005" name="J. Biol. Chem.">
        <title>Zhangfei is a potent and specific inhibitor of the host cell factor-binding transcription factor Luman.</title>
        <authorList>
            <person name="Misra V."/>
            <person name="Rapin N."/>
            <person name="Akhova O."/>
            <person name="Bainbridge M."/>
            <person name="Korchinski P."/>
        </authorList>
    </citation>
    <scope>INTERACTION WITH CREBZF AND CREB3</scope>
</reference>
<reference key="26">
    <citation type="journal article" date="2006" name="Nat. Biotechnol.">
        <title>A probability-based approach for high-throughput protein phosphorylation analysis and site localization.</title>
        <authorList>
            <person name="Beausoleil S.A."/>
            <person name="Villen J."/>
            <person name="Gerber S.A."/>
            <person name="Rush J."/>
            <person name="Gygi S.P."/>
        </authorList>
    </citation>
    <scope>PHOSPHORYLATION [LARGE SCALE ANALYSIS] AT SER-666; THR-1491 AND SER-1507</scope>
    <scope>IDENTIFICATION BY MASS SPECTROMETRY [LARGE SCALE ANALYSIS]</scope>
    <source>
        <tissue>Cervix carcinoma</tissue>
    </source>
</reference>
<reference key="27">
    <citation type="journal article" date="2006" name="Proc. Natl. Acad. Sci. U.S.A.">
        <title>Site-specific proteolysis of the transcriptional coactivator HCF-1 can regulate its interaction with protein cofactors.</title>
        <authorList>
            <person name="Vogel J.L."/>
            <person name="Kristie T.M."/>
        </authorList>
    </citation>
    <scope>FUNCTION</scope>
    <scope>AUTOCATALYTIC CLEAVAGE</scope>
    <scope>INTERACTION WITH FHL2</scope>
</reference>
<reference key="28">
    <citation type="journal article" date="2007" name="J. Proteome Res.">
        <title>Improved titanium dioxide enrichment of phosphopeptides from HeLa cells and high confident phosphopeptide identification by cross-validation of MS/MS and MS/MS/MS spectra.</title>
        <authorList>
            <person name="Yu L.R."/>
            <person name="Zhu Z."/>
            <person name="Chan K.C."/>
            <person name="Issaq H.J."/>
            <person name="Dimitrov D.S."/>
            <person name="Veenstra T.D."/>
        </authorList>
    </citation>
    <scope>PHOSPHORYLATION [LARGE SCALE ANALYSIS] AT SER-666</scope>
    <scope>IDENTIFICATION BY MASS SPECTROMETRY [LARGE SCALE ANALYSIS]</scope>
    <source>
        <tissue>Cervix carcinoma</tissue>
    </source>
</reference>
<reference key="29">
    <citation type="journal article" date="2007" name="Proc. Natl. Acad. Sci. U.S.A.">
        <title>The coactivator host cell factor-1 mediates Set1 and MLL1 H3K4 trimethylation at herpesvirus immediate early promoters for initiation of infection.</title>
        <authorList>
            <person name="Narayanan A."/>
            <person name="Ruyechan W.T."/>
            <person name="Kristie T.M."/>
        </authorList>
    </citation>
    <scope>FUNCTION</scope>
</reference>
<reference key="30">
    <citation type="journal article" date="2008" name="Mol. Cell. Biol.">
        <title>Wdr82 is a C-terminal domain-binding protein that recruits the Setd1A Histone H3-Lys4 methyltransferase complex to transcription start sites of transcribed human genes.</title>
        <authorList>
            <person name="Lee J.H."/>
            <person name="Skalnik D.G."/>
        </authorList>
    </citation>
    <scope>IDENTIFICATION IN SET1 COMPLEX</scope>
    <scope>INTERACTION WITH SETD1A</scope>
</reference>
<reference key="31">
    <citation type="journal article" date="2008" name="Mol. Cell. Biol.">
        <title>Molecular regulation of H3K4 trimethylation by Wdr82, a component of human Set1/COMPASS.</title>
        <authorList>
            <person name="Wu M."/>
            <person name="Wang P.F."/>
            <person name="Lee J.S."/>
            <person name="Martin-Brown S."/>
            <person name="Florens L."/>
            <person name="Washburn M."/>
            <person name="Shilatifard A."/>
        </authorList>
    </citation>
    <scope>IDENTIFICATION IN SET1 COMPLEX</scope>
</reference>
<reference key="32">
    <citation type="journal article" date="2008" name="Proc. Natl. Acad. Sci. U.S.A.">
        <title>A quantitative atlas of mitotic phosphorylation.</title>
        <authorList>
            <person name="Dephoure N."/>
            <person name="Zhou C."/>
            <person name="Villen J."/>
            <person name="Beausoleil S.A."/>
            <person name="Bakalarski C.E."/>
            <person name="Elledge S.J."/>
            <person name="Gygi S.P."/>
        </authorList>
    </citation>
    <scope>PHOSPHORYLATION [LARGE SCALE ANALYSIS] AT SER-666; SER-1205 AND SER-1507</scope>
    <scope>IDENTIFICATION BY MASS SPECTROMETRY [LARGE SCALE ANALYSIS]</scope>
    <source>
        <tissue>Cervix carcinoma</tissue>
    </source>
</reference>
<reference key="33">
    <citation type="journal article" date="2009" name="Anal. Chem.">
        <title>Lys-N and trypsin cover complementary parts of the phosphoproteome in a refined SCX-based approach.</title>
        <authorList>
            <person name="Gauci S."/>
            <person name="Helbig A.O."/>
            <person name="Slijper M."/>
            <person name="Krijgsveld J."/>
            <person name="Heck A.J."/>
            <person name="Mohammed S."/>
        </authorList>
    </citation>
    <scope>ACETYLATION [LARGE SCALE ANALYSIS] AT ALA-2</scope>
    <scope>CLEAVAGE OF INITIATOR METHIONINE [LARGE SCALE ANALYSIS]</scope>
    <scope>IDENTIFICATION BY MASS SPECTROMETRY [LARGE SCALE ANALYSIS]</scope>
</reference>
<reference key="34">
    <citation type="journal article" date="2009" name="J. Biol. Chem.">
        <title>Identification and characterization of a novel nuclear protein complex involved in nuclear hormone receptor-mediated gene regulation.</title>
        <authorList>
            <person name="Garapaty S."/>
            <person name="Xu C.F."/>
            <person name="Trojer P."/>
            <person name="Mahajan M.A."/>
            <person name="Neubert T.A."/>
            <person name="Samuels H.H."/>
        </authorList>
    </citation>
    <scope>IDENTIFICATION IN A COMPLEX WITH ZNF335; HCFC1; CCAR2; EMSY; MKI67; RBBP5; ASH2L AND WDR5</scope>
</reference>
<reference key="35">
    <citation type="journal article" date="2009" name="J. Biol. Chem.">
        <title>The deubiquitinating enzyme BAP1 regulates cell growth via interaction with HCF-1.</title>
        <authorList>
            <person name="Machida Y.J."/>
            <person name="Machida Y."/>
            <person name="Vashisht A.A."/>
            <person name="Wohlschlegel J.A."/>
            <person name="Dutta A."/>
        </authorList>
    </citation>
    <scope>UBIQUITINATION AT LYS-105; LYS-163; LYS-244 AND LYS-363</scope>
    <scope>DEUBIQUITINATION BY BAP1</scope>
    <scope>MUTAGENESIS OF PRO-134</scope>
</reference>
<reference key="36">
    <citation type="journal article" date="2009" name="Mol. Cell. Biol.">
        <title>Association of C-terminal ubiquitin hydrolase BRCA1-associated protein 1 with cell cycle regulator host cell factor 1.</title>
        <authorList>
            <person name="Misaghi S."/>
            <person name="Ottosen S."/>
            <person name="Izrael-Tomasevic A."/>
            <person name="Arnott D."/>
            <person name="Lamkanfi M."/>
            <person name="Lee J."/>
            <person name="Liu J."/>
            <person name="O'Rourke K."/>
            <person name="Dixit V.M."/>
            <person name="Wilson A.C."/>
        </authorList>
    </citation>
    <scope>UBIQUITINATION AT LYS-1807 AND LYS-1808</scope>
    <scope>DEUBIQUITINATION BY BAP1</scope>
    <scope>SUBCELLULAR LOCATION</scope>
</reference>
<reference key="37">
    <citation type="journal article" date="2009" name="Nature">
        <title>GlcNAcylation of a histone methyltransferase in retinoic-acid-induced granulopoiesis.</title>
        <authorList>
            <person name="Fujiki R."/>
            <person name="Chikanishi T."/>
            <person name="Hashiba W."/>
            <person name="Ito H."/>
            <person name="Takada I."/>
            <person name="Roeder R.G."/>
            <person name="Kitagawa H."/>
            <person name="Kato S."/>
        </authorList>
    </citation>
    <scope>RETRACTED PAPER</scope>
</reference>
<reference key="38">
    <citation type="journal article" date="2014" name="Nature">
        <title>Retraction: GlcNAcylation of a histone methyltransferase in retinoic-acid-induced granulopoiesis.</title>
        <authorList>
            <person name="Fujiki R."/>
            <person name="Chikanishi T."/>
            <person name="Hashiba W."/>
            <person name="Ito H."/>
            <person name="Takada I."/>
            <person name="Roeder R.G."/>
            <person name="Kitagawa H."/>
            <person name="Kato S."/>
        </authorList>
    </citation>
    <scope>CAUTION</scope>
    <scope>RETRACTION NOTICE OF PUBMED:19377461</scope>
</reference>
<reference key="39">
    <citation type="journal article" date="2009" name="Sci. Signal.">
        <title>Quantitative phosphoproteomic analysis of T cell receptor signaling reveals system-wide modulation of protein-protein interactions.</title>
        <authorList>
            <person name="Mayya V."/>
            <person name="Lundgren D.H."/>
            <person name="Hwang S.-I."/>
            <person name="Rezaul K."/>
            <person name="Wu L."/>
            <person name="Eng J.K."/>
            <person name="Rodionov V."/>
            <person name="Han D.K."/>
        </authorList>
    </citation>
    <scope>PHOSPHORYLATION [LARGE SCALE ANALYSIS] AT SER-411 AND SER-1507</scope>
    <scope>IDENTIFICATION BY MASS SPECTROMETRY [LARGE SCALE ANALYSIS]</scope>
    <source>
        <tissue>Leukemic T-cell</tissue>
    </source>
</reference>
<reference key="40">
    <citation type="journal article" date="2009" name="Science">
        <title>Lysine acetylation targets protein complexes and co-regulates major cellular functions.</title>
        <authorList>
            <person name="Choudhary C."/>
            <person name="Kumar C."/>
            <person name="Gnad F."/>
            <person name="Nielsen M.L."/>
            <person name="Rehman M."/>
            <person name="Walther T.C."/>
            <person name="Olsen J.V."/>
            <person name="Mann M."/>
        </authorList>
    </citation>
    <scope>ACETYLATION [LARGE SCALE ANALYSIS] AT LYS-288; LYS-813 AND LYS-2005</scope>
    <scope>IDENTIFICATION BY MASS SPECTROMETRY [LARGE SCALE ANALYSIS]</scope>
</reference>
<reference key="41">
    <citation type="journal article" date="2010" name="Sci. Signal.">
        <title>Quantitative phosphoproteomics reveals widespread full phosphorylation site occupancy during mitosis.</title>
        <authorList>
            <person name="Olsen J.V."/>
            <person name="Vermeulen M."/>
            <person name="Santamaria A."/>
            <person name="Kumar C."/>
            <person name="Miller M.L."/>
            <person name="Jensen L.J."/>
            <person name="Gnad F."/>
            <person name="Cox J."/>
            <person name="Jensen T.S."/>
            <person name="Nigg E.A."/>
            <person name="Brunak S."/>
            <person name="Mann M."/>
        </authorList>
    </citation>
    <scope>ACETYLATION [LARGE SCALE ANALYSIS] AT ALA-2</scope>
    <scope>PHOSPHORYLATION [LARGE SCALE ANALYSIS] AT SER-6; SER-666; SER-669 AND SER-1507</scope>
    <scope>CLEAVAGE OF INITIATOR METHIONINE [LARGE SCALE ANALYSIS]</scope>
    <scope>IDENTIFICATION BY MASS SPECTROMETRY [LARGE SCALE ANALYSIS]</scope>
    <source>
        <tissue>Cervix carcinoma</tissue>
    </source>
</reference>
<reference key="42">
    <citation type="journal article" date="2011" name="BMC Syst. Biol.">
        <title>Initial characterization of the human central proteome.</title>
        <authorList>
            <person name="Burkard T.R."/>
            <person name="Planyavsky M."/>
            <person name="Kaupe I."/>
            <person name="Breitwieser F.P."/>
            <person name="Buerckstuemmer T."/>
            <person name="Bennett K.L."/>
            <person name="Superti-Furga G."/>
            <person name="Colinge J."/>
        </authorList>
    </citation>
    <scope>IDENTIFICATION BY MASS SPECTROMETRY [LARGE SCALE ANALYSIS]</scope>
</reference>
<reference key="43">
    <citation type="journal article" date="2011" name="Sci. Signal.">
        <title>System-wide temporal characterization of the proteome and phosphoproteome of human embryonic stem cell differentiation.</title>
        <authorList>
            <person name="Rigbolt K.T."/>
            <person name="Prokhorova T.A."/>
            <person name="Akimov V."/>
            <person name="Henningsen J."/>
            <person name="Johansen P.T."/>
            <person name="Kratchmarova I."/>
            <person name="Kassem M."/>
            <person name="Mann M."/>
            <person name="Olsen J.V."/>
            <person name="Blagoev B."/>
        </authorList>
    </citation>
    <scope>ACETYLATION [LARGE SCALE ANALYSIS] AT ALA-2</scope>
    <scope>PHOSPHORYLATION [LARGE SCALE ANALYSIS] AT SER-6; SER-666 AND SER-1507</scope>
    <scope>CLEAVAGE OF INITIATOR METHIONINE [LARGE SCALE ANALYSIS]</scope>
    <scope>IDENTIFICATION BY MASS SPECTROMETRY [LARGE SCALE ANALYSIS]</scope>
</reference>
<reference key="44">
    <citation type="journal article" date="2012" name="Mol. Cell. Proteomics">
        <title>Comparative large-scale characterisation of plant vs. mammal proteins reveals similar and idiosyncratic N-alpha acetylation features.</title>
        <authorList>
            <person name="Bienvenut W.V."/>
            <person name="Sumpton D."/>
            <person name="Martinez A."/>
            <person name="Lilla S."/>
            <person name="Espagne C."/>
            <person name="Meinnel T."/>
            <person name="Giglione C."/>
        </authorList>
    </citation>
    <scope>ACETYLATION [LARGE SCALE ANALYSIS] AT ALA-2</scope>
    <scope>CLEAVAGE OF INITIATOR METHIONINE [LARGE SCALE ANALYSIS]</scope>
    <scope>IDENTIFICATION BY MASS SPECTROMETRY [LARGE SCALE ANALYSIS]</scope>
</reference>
<reference key="45">
    <citation type="journal article" date="2012" name="Proc. Natl. Acad. Sci. U.S.A.">
        <title>N-terminal acetylome analyses and functional insights of the N-terminal acetyltransferase NatB.</title>
        <authorList>
            <person name="Van Damme P."/>
            <person name="Lasa M."/>
            <person name="Polevoda B."/>
            <person name="Gazquez C."/>
            <person name="Elosegui-Artola A."/>
            <person name="Kim D.S."/>
            <person name="De Juan-Pardo E."/>
            <person name="Demeyer K."/>
            <person name="Hole K."/>
            <person name="Larrea E."/>
            <person name="Timmerman E."/>
            <person name="Prieto J."/>
            <person name="Arnesen T."/>
            <person name="Sherman F."/>
            <person name="Gevaert K."/>
            <person name="Aldabe R."/>
        </authorList>
    </citation>
    <scope>ACETYLATION [LARGE SCALE ANALYSIS] AT ALA-2</scope>
    <scope>CLEAVAGE OF INITIATOR METHIONINE [LARGE SCALE ANALYSIS]</scope>
    <scope>IDENTIFICATION BY MASS SPECTROMETRY [LARGE SCALE ANALYSIS]</scope>
</reference>
<reference key="46">
    <citation type="journal article" date="2013" name="J. Proteome Res.">
        <title>Toward a comprehensive characterization of a human cancer cell phosphoproteome.</title>
        <authorList>
            <person name="Zhou H."/>
            <person name="Di Palma S."/>
            <person name="Preisinger C."/>
            <person name="Peng M."/>
            <person name="Polat A.N."/>
            <person name="Heck A.J."/>
            <person name="Mohammed S."/>
        </authorList>
    </citation>
    <scope>PHOSPHORYLATION [LARGE SCALE ANALYSIS] AT SER-6; SER-598; SER-666; SER-1205 AND SER-1224</scope>
    <scope>IDENTIFICATION BY MASS SPECTROMETRY [LARGE SCALE ANALYSIS]</scope>
    <source>
        <tissue>Cervix carcinoma</tissue>
        <tissue>Erythroleukemia</tissue>
    </source>
</reference>
<reference key="47">
    <citation type="journal article" date="2014" name="J. Proteomics">
        <title>An enzyme assisted RP-RPLC approach for in-depth analysis of human liver phosphoproteome.</title>
        <authorList>
            <person name="Bian Y."/>
            <person name="Song C."/>
            <person name="Cheng K."/>
            <person name="Dong M."/>
            <person name="Wang F."/>
            <person name="Huang J."/>
            <person name="Sun D."/>
            <person name="Wang L."/>
            <person name="Ye M."/>
            <person name="Zou H."/>
        </authorList>
    </citation>
    <scope>PHOSPHORYLATION [LARGE SCALE ANALYSIS] AT SER-1497; SER-1507 AND SER-1771</scope>
    <scope>IDENTIFICATION BY MASS SPECTROMETRY [LARGE SCALE ANALYSIS]</scope>
    <source>
        <tissue>Liver</tissue>
    </source>
</reference>
<reference key="48">
    <citation type="journal article" date="2014" name="Mol. Cell. Proteomics">
        <title>Immunoaffinity enrichment and mass spectrometry analysis of protein methylation.</title>
        <authorList>
            <person name="Guo A."/>
            <person name="Gu H."/>
            <person name="Zhou J."/>
            <person name="Mulhern D."/>
            <person name="Wang Y."/>
            <person name="Lee K.A."/>
            <person name="Yang V."/>
            <person name="Aguiar M."/>
            <person name="Kornhauser J."/>
            <person name="Jia X."/>
            <person name="Ren J."/>
            <person name="Beausoleil S.A."/>
            <person name="Silva J.C."/>
            <person name="Vemulapalli V."/>
            <person name="Bedford M.T."/>
            <person name="Comb M.J."/>
        </authorList>
    </citation>
    <scope>METHYLATION [LARGE SCALE ANALYSIS] AT ARG-504; ARG-524 AND ARG-1219</scope>
    <scope>IDENTIFICATION BY MASS SPECTROMETRY [LARGE SCALE ANALYSIS]</scope>
    <source>
        <tissue>Colon carcinoma</tissue>
    </source>
</reference>
<reference key="49">
    <citation type="journal article" date="2010" name="J. Biol. Chem.">
        <title>Subunit composition and substrate specificity of a MOF-containing histone acetyltransferase distinct from the male-specific lethal (MSL) complex.</title>
        <authorList>
            <person name="Cai Y."/>
            <person name="Jin J."/>
            <person name="Swanson S.K."/>
            <person name="Cole M.D."/>
            <person name="Choi S.H."/>
            <person name="Florens L."/>
            <person name="Washburn M.P."/>
            <person name="Conaway J.W."/>
            <person name="Conaway R.C."/>
        </authorList>
    </citation>
    <scope>FUNCTION IN HISTONE H4 ACETYLATION</scope>
    <scope>IDENTIFICATION IN NSL COMPLEX</scope>
    <scope>SUBCELLULAR LOCATION</scope>
</reference>
<reference key="50">
    <citation type="journal article" date="2010" name="J. Biol. Chem.">
        <title>The THAP-zinc finger protein THAP1 associates with coactivator HCF-1 and O-GlcNAc transferase: a link between DYT6 and DYT3 dystonias.</title>
        <authorList>
            <person name="Mazars R."/>
            <person name="Gonzalez-de-Peredo A."/>
            <person name="Cayrol C."/>
            <person name="Lavigne A.C."/>
            <person name="Vogel J.L."/>
            <person name="Ortega N."/>
            <person name="Lacroix C."/>
            <person name="Gautier V."/>
            <person name="Huet G."/>
            <person name="Ray A."/>
            <person name="Monsarrat B."/>
            <person name="Kristie T.M."/>
            <person name="Girard J.P."/>
        </authorList>
    </citation>
    <scope>IDENTIFICATION BY MASS SPECTROMETRY IN A THAP1/THAP3-HCFC1-OGT COMPLEX</scope>
    <scope>INTERACTION WITH OGT; THAP1 AND THAP3</scope>
    <scope>GLYCOSYLATION</scope>
    <scope>FUNCTION</scope>
</reference>
<reference key="51">
    <citation type="journal article" date="2010" name="Mol. Cell. Biol.">
        <title>The ubiquitin carboxyl hydrolase BAP1 forms a ternary complex with YY1 and HCF-1 and is a critical regulator of gene expression.</title>
        <authorList>
            <person name="Yu H."/>
            <person name="Mashtalir N."/>
            <person name="Daou S."/>
            <person name="Hammond-Martel I."/>
            <person name="Ross J."/>
            <person name="Sui G."/>
            <person name="Hart G.W."/>
            <person name="Rauscher F.J. III"/>
            <person name="Drobetsky E."/>
            <person name="Milot E."/>
            <person name="Shi Y."/>
            <person name="Affar el B."/>
        </authorList>
    </citation>
    <scope>IDENTIFICATION IN THE PR-DUB COMPLEX</scope>
    <scope>INTERACTION WITH YY1 AND BAP1</scope>
    <scope>IDENTIFICATION BY MASS SPECTROMETRY</scope>
</reference>
<reference key="52">
    <citation type="journal article" date="2011" name="Proc. Natl. Acad. Sci. U.S.A.">
        <title>Crosstalk between O-GlcNAcylation and proteolytic cleavage regulates the host cell factor-1 maturation pathway.</title>
        <authorList>
            <person name="Daou S."/>
            <person name="Mashtalir N."/>
            <person name="Hammond-Martel I."/>
            <person name="Pak H."/>
            <person name="Yu H."/>
            <person name="Sui G."/>
            <person name="Vogel J.L."/>
            <person name="Kristie T.M."/>
            <person name="Affar E.B."/>
        </authorList>
    </citation>
    <scope>GLYCOSYLATION</scope>
    <scope>SUBCELLULAR LOCATION</scope>
    <scope>PROTEOLYTIC PROCESSING</scope>
    <scope>INTERACTION WITH OGT</scope>
</reference>
<reference key="53">
    <citation type="journal article" date="2013" name="EMBO J.">
        <title>TET2 and TET3 regulate GlcNAcylation and H3K4 methylation through OGT and SET1/COMPASS.</title>
        <authorList>
            <person name="Deplus R."/>
            <person name="Delatte B."/>
            <person name="Schwinn M.K."/>
            <person name="Defrance M."/>
            <person name="Mendez J."/>
            <person name="Murphy N."/>
            <person name="Dawson M.A."/>
            <person name="Volkmar M."/>
            <person name="Putmans P."/>
            <person name="Calonne E."/>
            <person name="Shih A.H."/>
            <person name="Levine R.L."/>
            <person name="Bernard O."/>
            <person name="Mercher T."/>
            <person name="Solary E."/>
            <person name="Urh M."/>
            <person name="Daniels D.L."/>
            <person name="Fuks F."/>
        </authorList>
    </citation>
    <scope>GLYCOSYLATION</scope>
    <scope>INTERACTION WITH OGT; TET2 AND TET3</scope>
</reference>
<reference key="54">
    <citation type="journal article" date="2013" name="J. Biol. Chem.">
        <title>Mixed lineage leukemia 5 (MLL5) protein regulates cell cycle progression and E2F1-responsive gene expression via association with host cell factor-1 (HCF-1).</title>
        <authorList>
            <person name="Zhou P."/>
            <person name="Wang Z."/>
            <person name="Yuan X."/>
            <person name="Zhou C."/>
            <person name="Liu L."/>
            <person name="Wan X."/>
            <person name="Zhang F."/>
            <person name="Ding X."/>
            <person name="Wang C."/>
            <person name="Xiong S."/>
            <person name="Wang Z."/>
            <person name="Yuan J."/>
            <person name="Li Q."/>
            <person name="Zhang Y."/>
        </authorList>
    </citation>
    <scope>FUNCTION</scope>
    <scope>INTERACTION WITH KMT2E AND E2F1</scope>
    <scope>SUBCELLULAR LOCATION</scope>
</reference>
<reference key="55">
    <citation type="journal article" date="2015" name="Mol. Cell. Biol.">
        <title>Genomic Determinants of THAP11/ZNF143/HCFC1 Complex Recruitment to Chromatin.</title>
        <authorList>
            <person name="Vinckevicius A."/>
            <person name="Parker J.B."/>
            <person name="Chakravarti D."/>
        </authorList>
    </citation>
    <scope>FUNCTION</scope>
</reference>
<reference key="56">
    <citation type="journal article" date="2017" name="J. Biol. Chem.">
        <title>Identification and characterization of a missense mutation in the O-linked beta-N-acetylglucosamine (O-GlcNAc) transferase gene that segregates with X-linked intellectual disability.</title>
        <authorList>
            <person name="Vaidyanathan K."/>
            <person name="Niranjan T."/>
            <person name="Selvan N."/>
            <person name="Teo C.F."/>
            <person name="May M."/>
            <person name="Patel S."/>
            <person name="Weatherly B."/>
            <person name="Skinner C."/>
            <person name="Opitz J."/>
            <person name="Carey J."/>
            <person name="Viskochil D."/>
            <person name="Gecz J."/>
            <person name="Shaw M."/>
            <person name="Peng Y."/>
            <person name="Alexov E."/>
            <person name="Wang T."/>
            <person name="Schwartz C."/>
            <person name="Wells L."/>
        </authorList>
    </citation>
    <scope>GLYCOSYLATION</scope>
    <scope>PROTEOLYTIC PROCESSING</scope>
</reference>
<reference key="57">
    <citation type="journal article" date="2017" name="J. Biol. Chem.">
        <title>Mutations in N-acetylglucosamine (O-GlcNAc) transferase in patients with X-linked intellectual disability.</title>
        <authorList>
            <person name="Willems A.P."/>
            <person name="Gundogdu M."/>
            <person name="Kempers M.J.E."/>
            <person name="Giltay J.C."/>
            <person name="Pfundt R."/>
            <person name="Elferink M."/>
            <person name="Loza B.F."/>
            <person name="Fuijkschot J."/>
            <person name="Ferenbach A.T."/>
            <person name="van Gassen K.L.I."/>
            <person name="van Aalten D.M.F."/>
            <person name="Lefeber D.J."/>
        </authorList>
    </citation>
    <scope>GLYCOSYLATION</scope>
    <scope>PROTEOLYTIC PROCESSING</scope>
</reference>
<reference key="58">
    <citation type="journal article" date="2017" name="Nat. Struct. Mol. Biol.">
        <title>Site-specific mapping of the human SUMO proteome reveals co-modification with phosphorylation.</title>
        <authorList>
            <person name="Hendriks I.A."/>
            <person name="Lyon D."/>
            <person name="Young C."/>
            <person name="Jensen L.J."/>
            <person name="Vertegaal A.C."/>
            <person name="Nielsen M.L."/>
        </authorList>
    </citation>
    <scope>SUMOYLATION [LARGE SCALE ANALYSIS] AT LYS-282 AND LYS-2024</scope>
    <scope>IDENTIFICATION BY MASS SPECTROMETRY [LARGE SCALE ANALYSIS]</scope>
</reference>
<reference key="59">
    <citation type="journal article" date="2019" name="Nat. Commun.">
        <title>BAP1 complex promotes transcription by opposing PRC1-mediated H2A ubiquitylation.</title>
        <authorList>
            <person name="Campagne A."/>
            <person name="Lee M.K."/>
            <person name="Zielinski D."/>
            <person name="Michaud A."/>
            <person name="Le Corre S."/>
            <person name="Dingli F."/>
            <person name="Chen H."/>
            <person name="Shahidian L.Z."/>
            <person name="Vassilev I."/>
            <person name="Servant N."/>
            <person name="Loew D."/>
            <person name="Pasmant E."/>
            <person name="Postel-Vinay S."/>
            <person name="Wassef M."/>
            <person name="Margueron R."/>
        </authorList>
    </citation>
    <scope>IDENTIFICATION IN THE PR-DUB COMPLEX</scope>
    <scope>IDENTIFICATION BY MASS SPECTROMETRY</scope>
</reference>
<reference key="60">
    <citation type="journal article" date="2012" name="Am. J. Hum. Genet.">
        <title>A noncoding, regulatory mutation implicates HCFC1 in nonsyndromic intellectual disability.</title>
        <authorList>
            <person name="Huang L."/>
            <person name="Jolly L.A."/>
            <person name="Willis-Owen S."/>
            <person name="Gardner A."/>
            <person name="Kumar R."/>
            <person name="Douglas E."/>
            <person name="Shoubridge C."/>
            <person name="Wieczorek D."/>
            <person name="Tzschach A."/>
            <person name="Cohen M."/>
            <person name="Hackett A."/>
            <person name="Field M."/>
            <person name="Froyen G."/>
            <person name="Hu H."/>
            <person name="Haas S.A."/>
            <person name="Ropers H.H."/>
            <person name="Kalscheuer V.M."/>
            <person name="Corbett M.A."/>
            <person name="Gecz J."/>
        </authorList>
    </citation>
    <scope>VARIANT MAHCX ASN-225</scope>
</reference>
<reference key="61">
    <citation type="journal article" date="2020" name="PLoS ONE">
        <title>THAP11F80L cobalamin disorder-associated mutation reveals normal and pathogenic THAP11 functions in gene expression and cell proliferation.</title>
        <authorList>
            <person name="Dehaene H."/>
            <person name="Praz V."/>
            <person name="Lhote P."/>
            <person name="Lopes M."/>
            <person name="Herr W."/>
        </authorList>
    </citation>
    <scope>INTERACTION WITH THAP7 AND THAP11</scope>
</reference>
<organism>
    <name type="scientific">Homo sapiens</name>
    <name type="common">Human</name>
    <dbReference type="NCBI Taxonomy" id="9606"/>
    <lineage>
        <taxon>Eukaryota</taxon>
        <taxon>Metazoa</taxon>
        <taxon>Chordata</taxon>
        <taxon>Craniata</taxon>
        <taxon>Vertebrata</taxon>
        <taxon>Euteleostomi</taxon>
        <taxon>Mammalia</taxon>
        <taxon>Eutheria</taxon>
        <taxon>Euarchontoglires</taxon>
        <taxon>Primates</taxon>
        <taxon>Haplorrhini</taxon>
        <taxon>Catarrhini</taxon>
        <taxon>Hominidae</taxon>
        <taxon>Homo</taxon>
    </lineage>
</organism>
<feature type="initiator methionine" description="Removed" evidence="59 62 63 64 65">
    <location>
        <position position="1"/>
    </location>
</feature>
<feature type="chain" id="PRO_0000016611" description="HCF N-terminal chain 6" evidence="54">
    <location>
        <begin position="2"/>
        <end position="1423"/>
    </location>
</feature>
<feature type="chain" id="PRO_0000016612" description="HCF N-terminal chain 5" evidence="54">
    <location>
        <begin position="2"/>
        <end position="1323"/>
    </location>
</feature>
<feature type="chain" id="PRO_0000016613" description="HCF N-terminal chain 4" evidence="54">
    <location>
        <begin position="2"/>
        <end position="1295"/>
    </location>
</feature>
<feature type="chain" id="PRO_0000016614" description="HCF N-terminal chain 3" evidence="54">
    <location>
        <begin position="2"/>
        <end position="1110"/>
    </location>
</feature>
<feature type="chain" id="PRO_0000016615" description="HCF N-terminal chain 2" evidence="43">
    <location>
        <begin position="2"/>
        <end position="1081"/>
    </location>
</feature>
<feature type="chain" id="PRO_0000016616" description="HCF N-terminal chain 1" evidence="43">
    <location>
        <begin position="2"/>
        <end position="1019"/>
    </location>
</feature>
<feature type="chain" id="PRO_0000016617" description="HCF C-terminal chain 1" evidence="43">
    <location>
        <begin position="1020"/>
        <end position="2035"/>
    </location>
</feature>
<feature type="chain" id="PRO_0000016618" description="HCF C-terminal chain 2" evidence="43">
    <location>
        <begin position="1082"/>
        <end position="2035"/>
    </location>
</feature>
<feature type="chain" id="PRO_0000016619" description="HCF C-terminal chain 3" evidence="54">
    <location>
        <begin position="1111"/>
        <end position="2035"/>
    </location>
</feature>
<feature type="chain" id="PRO_0000016620" description="HCF C-terminal chain 4" evidence="54">
    <location>
        <begin position="1296"/>
        <end position="2035"/>
    </location>
</feature>
<feature type="chain" id="PRO_0000016621" description="HCF C-terminal chain 5" evidence="54">
    <location>
        <begin position="1324"/>
        <end position="2035"/>
    </location>
</feature>
<feature type="chain" id="PRO_0000016622" description="HCF C-terminal chain 6" evidence="54">
    <location>
        <begin position="1424"/>
        <end position="2035"/>
    </location>
</feature>
<feature type="repeat" description="Kelch 1" evidence="3">
    <location>
        <begin position="44"/>
        <end position="89"/>
    </location>
</feature>
<feature type="repeat" description="Kelch 2" evidence="3">
    <location>
        <begin position="93"/>
        <end position="140"/>
    </location>
</feature>
<feature type="repeat" description="Kelch 3" evidence="3">
    <location>
        <begin position="148"/>
        <end position="194"/>
    </location>
</feature>
<feature type="repeat" description="Kelch 4" evidence="3">
    <location>
        <begin position="217"/>
        <end position="265"/>
    </location>
</feature>
<feature type="repeat" description="Kelch 5" evidence="3">
    <location>
        <begin position="266"/>
        <end position="313"/>
    </location>
</feature>
<feature type="domain" description="Fibronectin type-III 1" evidence="4">
    <location>
        <begin position="366"/>
        <end position="466"/>
    </location>
</feature>
<feature type="repeat" description="HCF repeat 1" evidence="54">
    <location>
        <begin position="1010"/>
        <end position="1035"/>
    </location>
</feature>
<feature type="repeat" description="HCF repeat 2" evidence="54">
    <location>
        <begin position="1072"/>
        <end position="1097"/>
    </location>
</feature>
<feature type="repeat" description="HCF repeat 3" evidence="54">
    <location>
        <begin position="1101"/>
        <end position="1126"/>
    </location>
</feature>
<feature type="repeat" description="HCF repeat 4; degenerate" evidence="54">
    <location>
        <begin position="1158"/>
        <end position="1183"/>
    </location>
</feature>
<feature type="repeat" description="HCF repeat 5" evidence="54">
    <location>
        <begin position="1286"/>
        <end position="1311"/>
    </location>
</feature>
<feature type="repeat" description="HCF repeat 6" evidence="54">
    <location>
        <begin position="1314"/>
        <end position="1339"/>
    </location>
</feature>
<feature type="repeat" description="HCF repeat 7; degenerate" evidence="54">
    <location>
        <begin position="1349"/>
        <end position="1374"/>
    </location>
</feature>
<feature type="repeat" description="HCF repeat 8" evidence="54">
    <location>
        <begin position="1414"/>
        <end position="1439"/>
    </location>
</feature>
<feature type="domain" description="Fibronectin type-III 2" evidence="4">
    <location>
        <begin position="1797"/>
        <end position="1888"/>
    </location>
</feature>
<feature type="domain" description="Fibronectin type-III 3" evidence="4">
    <location>
        <begin position="1890"/>
        <end position="2006"/>
    </location>
</feature>
<feature type="region of interest" description="Disordered" evidence="5">
    <location>
        <begin position="407"/>
        <end position="434"/>
    </location>
</feature>
<feature type="region of interest" description="Required for interaction with OGT" evidence="33">
    <location>
        <begin position="500"/>
        <end position="550"/>
    </location>
</feature>
<feature type="region of interest" description="Interaction with SIN3A" evidence="16">
    <location>
        <begin position="610"/>
        <end position="722"/>
    </location>
</feature>
<feature type="region of interest" description="Interaction with ZBTB17" evidence="15">
    <location>
        <begin position="750"/>
        <end position="902"/>
    </location>
</feature>
<feature type="region of interest" description="Interaction with GABP2" evidence="8">
    <location>
        <begin position="813"/>
        <end position="912"/>
    </location>
</feature>
<feature type="region of interest" description="Disordered" evidence="5">
    <location>
        <begin position="1292"/>
        <end position="1371"/>
    </location>
</feature>
<feature type="region of interest" description="Disordered" evidence="5">
    <location>
        <begin position="1435"/>
        <end position="1470"/>
    </location>
</feature>
<feature type="region of interest" description="Disordered" evidence="5">
    <location>
        <begin position="1487"/>
        <end position="1515"/>
    </location>
</feature>
<feature type="region of interest" description="Disordered" evidence="5">
    <location>
        <begin position="1994"/>
        <end position="2035"/>
    </location>
</feature>
<feature type="compositionally biased region" description="Pro residues" evidence="5">
    <location>
        <begin position="413"/>
        <end position="428"/>
    </location>
</feature>
<feature type="compositionally biased region" description="Low complexity" evidence="5">
    <location>
        <begin position="1299"/>
        <end position="1312"/>
    </location>
</feature>
<feature type="compositionally biased region" description="Low complexity" evidence="5">
    <location>
        <begin position="1329"/>
        <end position="1339"/>
    </location>
</feature>
<feature type="compositionally biased region" description="Low complexity" evidence="5">
    <location>
        <begin position="1362"/>
        <end position="1371"/>
    </location>
</feature>
<feature type="compositionally biased region" description="Pro residues" evidence="5">
    <location>
        <begin position="1493"/>
        <end position="1502"/>
    </location>
</feature>
<feature type="site" description="Cleavage; by autolysis" evidence="43">
    <location>
        <begin position="1019"/>
        <end position="1020"/>
    </location>
</feature>
<feature type="site" description="Cleavage; by autolysis" evidence="43">
    <location>
        <begin position="1081"/>
        <end position="1082"/>
    </location>
</feature>
<feature type="site" description="Cleavage; by autolysis" evidence="54">
    <location>
        <begin position="1110"/>
        <end position="1111"/>
    </location>
</feature>
<feature type="site" description="Cleavage; by autolysis" evidence="54">
    <location>
        <begin position="1295"/>
        <end position="1296"/>
    </location>
</feature>
<feature type="site" description="Cleavage; by autolysis" evidence="11 54">
    <location>
        <begin position="1323"/>
        <end position="1324"/>
    </location>
</feature>
<feature type="site" description="Cleavage; by autolysis" evidence="11 54">
    <location>
        <begin position="1423"/>
        <end position="1424"/>
    </location>
</feature>
<feature type="modified residue" description="N-acetylalanine" evidence="59 62 63 64 65">
    <location>
        <position position="2"/>
    </location>
</feature>
<feature type="modified residue" description="Phosphoserine" evidence="62 63 66">
    <location>
        <position position="6"/>
    </location>
</feature>
<feature type="modified residue" description="N6-acetyllysine" evidence="60">
    <location>
        <position position="288"/>
    </location>
</feature>
<feature type="modified residue" description="Phosphoserine" evidence="61">
    <location>
        <position position="411"/>
    </location>
</feature>
<feature type="modified residue" description="Omega-N-methylarginine" evidence="67">
    <location>
        <position position="504"/>
    </location>
</feature>
<feature type="modified residue" description="Omega-N-methylarginine" evidence="67">
    <location>
        <position position="524"/>
    </location>
</feature>
<feature type="modified residue" description="Phosphoserine" evidence="66">
    <location>
        <position position="598"/>
    </location>
</feature>
<feature type="modified residue" description="Phosphoserine" evidence="56 57 58 62 63 66">
    <location>
        <position position="666"/>
    </location>
</feature>
<feature type="modified residue" description="Phosphoserine" evidence="62">
    <location>
        <position position="669"/>
    </location>
</feature>
<feature type="modified residue" description="N6-acetyllysine" evidence="60">
    <location>
        <position position="813"/>
    </location>
</feature>
<feature type="modified residue" description="Phosphoserine" evidence="58 66">
    <location>
        <position position="1205"/>
    </location>
</feature>
<feature type="modified residue" description="Omega-N-methylarginine" evidence="67">
    <location>
        <position position="1219"/>
    </location>
</feature>
<feature type="modified residue" description="Phosphoserine" evidence="66">
    <location>
        <position position="1224"/>
    </location>
</feature>
<feature type="modified residue" description="Phosphothreonine" evidence="56">
    <location>
        <position position="1491"/>
    </location>
</feature>
<feature type="modified residue" description="Phosphoserine" evidence="68">
    <location>
        <position position="1497"/>
    </location>
</feature>
<feature type="modified residue" description="Phosphoserine" evidence="56 58 61 62 63 68">
    <location>
        <position position="1507"/>
    </location>
</feature>
<feature type="modified residue" description="Phosphoserine" evidence="68">
    <location>
        <position position="1771"/>
    </location>
</feature>
<feature type="modified residue" description="Phosphoserine" evidence="2">
    <location>
        <position position="1838"/>
    </location>
</feature>
<feature type="modified residue" description="N6-acetyllysine" evidence="60">
    <location>
        <position position="2005"/>
    </location>
</feature>
<feature type="cross-link" description="Glycyl lysine isopeptide (Lys-Gly) (interchain with G-Cter in ubiquitin)" evidence="29">
    <location>
        <position position="105"/>
    </location>
</feature>
<feature type="cross-link" description="Glycyl lysine isopeptide (Lys-Gly) (interchain with G-Cter in ubiquitin)" evidence="29">
    <location>
        <position position="163"/>
    </location>
</feature>
<feature type="cross-link" description="Glycyl lysine isopeptide (Lys-Gly) (interchain with G-Cter in ubiquitin)" evidence="29">
    <location>
        <position position="244"/>
    </location>
</feature>
<feature type="cross-link" description="Glycyl lysine isopeptide (Lys-Gly) (interchain with G-Cter in SUMO2)" evidence="69">
    <location>
        <position position="282"/>
    </location>
</feature>
<feature type="cross-link" description="Glycyl lysine isopeptide (Lys-Gly) (interchain with G-Cter in ubiquitin)" evidence="29">
    <location>
        <position position="363"/>
    </location>
</feature>
<feature type="cross-link" description="Glycyl lysine isopeptide (Lys-Gly) (interchain with G-Cter in ubiquitin)" evidence="27">
    <location>
        <position position="1807"/>
    </location>
</feature>
<feature type="cross-link" description="Glycyl lysine isopeptide (Lys-Gly) (interchain with G-Cter in ubiquitin)" evidence="27">
    <location>
        <position position="1808"/>
    </location>
</feature>
<feature type="cross-link" description="Glycyl lysine isopeptide (Lys-Gly) (interchain with G-Cter in SUMO2)" evidence="69">
    <location>
        <position position="2024"/>
    </location>
</feature>
<feature type="splice variant" id="VSP_002815" description="In isoform 2." evidence="52">
    <location>
        <begin position="382"/>
        <end position="450"/>
    </location>
</feature>
<feature type="splice variant" id="VSP_012984" description="In isoform 3." evidence="48">
    <original>P</original>
    <variation>L</variation>
    <location>
        <position position="428"/>
    </location>
</feature>
<feature type="splice variant" id="VSP_012985" description="In isoform 3." evidence="48">
    <location>
        <begin position="429"/>
        <end position="2035"/>
    </location>
</feature>
<feature type="splice variant" id="VSP_047138" description="In isoform 4." evidence="53">
    <original>P</original>
    <variation>PKISSMTETAPRALTTEVPIPAKITVTIANTETSDMPFSAVDILQ</variation>
    <location>
        <position position="1499"/>
    </location>
</feature>
<feature type="sequence variant" id="VAR_069098" description="In MAHCX; uncertain significance; dbSNP:rs318240758." evidence="34">
    <original>S</original>
    <variation>N</variation>
    <location>
        <position position="225"/>
    </location>
</feature>
<feature type="sequence variant" id="VAR_019813" description="In dbSNP:rs1051152." evidence="44">
    <original>S</original>
    <variation>P</variation>
    <location>
        <position position="1164"/>
    </location>
</feature>
<feature type="sequence variant" id="VAR_050043" description="In dbSNP:rs6643651.">
    <original>S</original>
    <variation>I</variation>
    <location>
        <position position="2004"/>
    </location>
</feature>
<feature type="mutagenesis site" description="Severely reduces VP16-induced complex (VIC) formation, but retains association with VP16. Unable to rescue proliferation in temperature-sensitive arrested cells. Abolishes interaction with CREB3." evidence="7">
    <original>P</original>
    <variation>S</variation>
    <location>
        <position position="30"/>
    </location>
</feature>
<feature type="mutagenesis site" description="Severely reduces VIC formation, but retains association with VP16. Severely reduces association with CREB3. Unable to rescue proliferation in temperature-sensitive arrested cells." evidence="7">
    <original>P</original>
    <variation>S</variation>
    <location>
        <position position="79"/>
    </location>
</feature>
<feature type="mutagenesis site" description="Moderately reduces VIC formation and association with VP16 and CREB3. Unable to rescue proliferation in temperature-sensitive arrested cells." evidence="7">
    <original>C</original>
    <variation>D</variation>
    <location>
        <position position="82"/>
    </location>
</feature>
<feature type="mutagenesis site" description="Minor reduction in VIC formation and association with VP16 and CREB3. Able to rescue proliferation in temperature-sensitive arrested cells." evidence="7">
    <original>K</original>
    <variation>D</variation>
    <location>
        <position position="105"/>
    </location>
</feature>
<feature type="mutagenesis site" description="Eliminates VIC formation and association with VP16. Weak association with POU2F1. Unable to associate with CREBZF and BAP1. Unable to rescue proliferation in temperature-sensitive arrested cells." evidence="7 29 45">
    <original>P</original>
    <variation>S</variation>
    <location>
        <position position="134"/>
    </location>
</feature>
<feature type="mutagenesis site" description="Eliminates VIC formation. Unable to rescue proliferation in temperature-sensitive arrested cells." evidence="7">
    <original>R</original>
    <variation>D</variation>
    <location>
        <position position="137"/>
    </location>
</feature>
<feature type="mutagenesis site" description="Eliminates VIC formation and association with VP16. Unable to rescue proliferation in temperature-sensitive arrested cells." evidence="7">
    <original>P</original>
    <variation>S</variation>
    <location>
        <position position="197"/>
    </location>
</feature>
<feature type="mutagenesis site" description="Eliminates VIC formation. Unable to rescue proliferation in temperature-sensitive arrested cells." evidence="7">
    <original>R</original>
    <variation>D</variation>
    <location>
        <position position="200"/>
    </location>
</feature>
<feature type="mutagenesis site" description="Eliminates VIC formation and association with VP16. Unable to rescue proliferation in temperature-sensitive arrested cells." evidence="7">
    <original>R</original>
    <variation>D</variation>
    <location>
        <position position="228"/>
    </location>
</feature>
<feature type="mutagenesis site" description="Minor reduction in VIC formation, but retains association with VP16. Unable to rescue proliferation in temperature-sensitive arrested cells." evidence="7">
    <original>P</original>
    <variation>S</variation>
    <location>
        <position position="252"/>
    </location>
</feature>
<feature type="mutagenesis site" description="Eliminates VIC formation. Unable to rescue proliferation in temperature-sensitive arrested cells." evidence="7">
    <original>R</original>
    <variation>D</variation>
    <location>
        <position position="255"/>
    </location>
</feature>
<feature type="mutagenesis site" description="Minor reduction in VIC formation and association with VP16. Weak association with POU2F1. Severely reduces association with CREB3. Able to rescue proliferation in temperature-sensitive arrested cells." evidence="7">
    <original>EWK</original>
    <variation>AAA</variation>
    <location>
        <begin position="289"/>
        <end position="291"/>
    </location>
</feature>
<feature type="mutagenesis site" description="Eliminates VIC formation and association with VP16. Unable to rescue proliferation in temperature-sensitive arrested cells." evidence="7">
    <original>P</original>
    <variation>S</variation>
    <location>
        <position position="319"/>
    </location>
</feature>
<feature type="mutagenesis site" description="Eliminates VIC formation. Unable to rescue proliferation in temperature-sensitive arrested cells." evidence="7">
    <original>R</original>
    <variation>D</variation>
    <location>
        <position position="322"/>
    </location>
</feature>
<feature type="mutagenesis site" description="Moderately reduces association with VP16 and CREB3. Able to rescue proliferation in temperature-sensitive arrested cells." evidence="7">
    <original>S</original>
    <variation>A</variation>
    <location>
        <position position="338"/>
    </location>
</feature>
<feature type="mutagenesis site" description="Eliminates VIC formation, but only minor reduction in association with VP16. Unable to associate with POU2F1, but only minor reduction in association with CREB3. Able to rescue proliferation in temperature-sensitive arrested cells." evidence="7">
    <original>RK</original>
    <variation>AA</variation>
    <location>
        <begin position="344"/>
        <end position="345"/>
    </location>
</feature>
<feature type="mutagenesis site" description="Reduces and disrupts cleavage at HCF repeat." evidence="43">
    <original>PCETH</original>
    <variation>AAAAA</variation>
    <location>
        <begin position="1017"/>
        <end position="1021"/>
    </location>
</feature>
<feature type="mutagenesis site" description="No effect on cleavage at HCF repeat.">
    <original>V</original>
    <variation>A</variation>
    <location>
        <position position="1072"/>
    </location>
</feature>
<feature type="mutagenesis site" description="No effect on cleavage at HCF repeat.">
    <original>R</original>
    <variation>A</variation>
    <location>
        <position position="1073"/>
    </location>
</feature>
<feature type="mutagenesis site" description="No effect on cleavage at HCF repeat.">
    <original>V</original>
    <variation>A</variation>
    <location>
        <position position="1074"/>
    </location>
</feature>
<feature type="mutagenesis site" description="No effect on cleavage at HCF repeat.">
    <original>C</original>
    <variation>A</variation>
    <location>
        <position position="1075"/>
    </location>
</feature>
<feature type="mutagenesis site" description="No effect on cleavage at HCF repeat.">
    <original>S</original>
    <variation>A</variation>
    <location>
        <position position="1076"/>
    </location>
</feature>
<feature type="mutagenesis site" description="No effect on cleavage at HCF repeat.">
    <original>N</original>
    <variation>A</variation>
    <location>
        <position position="1077"/>
    </location>
</feature>
<feature type="mutagenesis site" description="Inactivates cleavage at HCF repeat.">
    <original>P</original>
    <variation>A</variation>
    <location>
        <position position="1078"/>
    </location>
</feature>
<feature type="mutagenesis site" description="Reduces and disrupts cleavage at HCF repeat.">
    <original>PCETH</original>
    <variation>AAAAA</variation>
    <location>
        <begin position="1079"/>
        <end position="1083"/>
    </location>
</feature>
<feature type="mutagenesis site" description="Inactivates cleavage at HCF repeat.">
    <original>P</original>
    <variation>A</variation>
    <location>
        <position position="1079"/>
    </location>
</feature>
<feature type="mutagenesis site" description="Inactivates cleavage at HCF repeat.">
    <original>C</original>
    <variation>A</variation>
    <location>
        <position position="1080"/>
    </location>
</feature>
<feature type="mutagenesis site" description="Inactivates cleavage at HCF repeat.">
    <original>E</original>
    <variation>A</variation>
    <location>
        <position position="1081"/>
    </location>
</feature>
<feature type="mutagenesis site" description="Inactivates cleavage at HCF repeat.">
    <original>E</original>
    <variation>D</variation>
    <location>
        <position position="1081"/>
    </location>
</feature>
<feature type="mutagenesis site" description="Inactivates cleavage at HCF repeat.">
    <original>T</original>
    <variation>A</variation>
    <location>
        <position position="1082"/>
    </location>
</feature>
<feature type="mutagenesis site" description="Reduces cleavage at HCF repeat.">
    <original>T</original>
    <variation>F</variation>
    <location>
        <position position="1082"/>
    </location>
</feature>
<feature type="mutagenesis site" description="Reduces cleavage at HCF repeat.">
    <original>T</original>
    <variation>S</variation>
    <location>
        <position position="1082"/>
    </location>
</feature>
<feature type="mutagenesis site" description="Reduces cleavage at HCF repeat.">
    <original>H</original>
    <variation>A</variation>
    <location>
        <position position="1083"/>
    </location>
</feature>
<feature type="mutagenesis site" description="No effect on cleavage at HCF repeat.">
    <original>E</original>
    <variation>A</variation>
    <location>
        <position position="1084"/>
    </location>
</feature>
<feature type="mutagenesis site" description="Inactivates cleavage at HCF repeat.">
    <original>T</original>
    <variation>A</variation>
    <location>
        <position position="1085"/>
    </location>
</feature>
<feature type="mutagenesis site" description="No effect on cleavage at HCF repeat.">
    <original>G</original>
    <variation>A</variation>
    <location>
        <position position="1086"/>
    </location>
</feature>
<feature type="mutagenesis site" description="Inactivates cleavage at HCF repeat.">
    <original>T</original>
    <variation>A</variation>
    <location>
        <position position="1087"/>
    </location>
</feature>
<feature type="mutagenesis site" description="Inactivates cleavage at HCF repeat.">
    <original>T</original>
    <variation>A</variation>
    <location>
        <position position="1088"/>
    </location>
</feature>
<feature type="mutagenesis site" description="Reduces cleavage at HCF repeat.">
    <original>N</original>
    <variation>A</variation>
    <location>
        <position position="1089"/>
    </location>
</feature>
<feature type="mutagenesis site" description="Inactivates cleavage at HCF repeat.">
    <original>T</original>
    <variation>A</variation>
    <location>
        <position position="1090"/>
    </location>
</feature>
<feature type="mutagenesis site" description="Inactivates cleavage at HCF repeat.">
    <original>T</original>
    <variation>A</variation>
    <location>
        <position position="1092"/>
    </location>
</feature>
<feature type="mutagenesis site" description="Inactivates cleavage at HCF repeat.">
    <original>T</original>
    <variation>A</variation>
    <location>
        <position position="1093"/>
    </location>
</feature>
<feature type="mutagenesis site" description="Reduces cleavage at HCF repeat.">
    <original>T</original>
    <variation>A</variation>
    <location>
        <position position="1095"/>
    </location>
</feature>
<feature type="mutagenesis site" description="No effect on cleavage at HCF repeat.">
    <original>S</original>
    <variation>A</variation>
    <location>
        <position position="1096"/>
    </location>
</feature>
<feature type="mutagenesis site" description="No effect on cleavage at HCF repeat.">
    <original>N</original>
    <variation>A</variation>
    <location>
        <position position="1097"/>
    </location>
</feature>
<feature type="sequence conflict" description="In Ref. 5; CAA55790." evidence="53" ref="5">
    <original>A</original>
    <variation>R</variation>
    <location>
        <position position="564"/>
    </location>
</feature>
<feature type="sequence conflict" description="In Ref. 5; CAA55790." evidence="53" ref="5">
    <original>S</original>
    <variation>SVS</variation>
    <location>
        <position position="603"/>
    </location>
</feature>
<feature type="sequence conflict" description="In Ref. 2; no nucleotide entry." evidence="53" ref="2">
    <original>K</original>
    <variation>T</variation>
    <location>
        <position position="665"/>
    </location>
</feature>
<feature type="sequence conflict" description="In Ref. 2; no nucleotide entry." evidence="53" ref="2">
    <original>V</original>
    <variation>E</variation>
    <location>
        <position position="1638"/>
    </location>
</feature>
<feature type="sequence conflict" description="In Ref. 2; no nucleotide entry." evidence="53" ref="2">
    <original>V</original>
    <variation>A</variation>
    <location>
        <position position="1685"/>
    </location>
</feature>
<feature type="sequence conflict" description="In Ref. 2; no nucleotide entry." evidence="53" ref="2">
    <original>E</original>
    <variation>Q</variation>
    <location>
        <position position="1735"/>
    </location>
</feature>
<feature type="sequence conflict" description="In Ref. 5; CAA55790." evidence="53" ref="5">
    <original>G</original>
    <variation>A</variation>
    <location>
        <position position="1873"/>
    </location>
</feature>
<feature type="strand" evidence="70">
    <location>
        <begin position="368"/>
        <end position="375"/>
    </location>
</feature>
<feature type="strand" evidence="70">
    <location>
        <begin position="380"/>
        <end position="385"/>
    </location>
</feature>
<feature type="strand" evidence="70">
    <location>
        <begin position="391"/>
        <end position="399"/>
    </location>
</feature>
<feature type="strand" evidence="70">
    <location>
        <begin position="1813"/>
        <end position="1825"/>
    </location>
</feature>
<feature type="strand" evidence="70">
    <location>
        <begin position="1827"/>
        <end position="1829"/>
    </location>
</feature>
<feature type="strand" evidence="70">
    <location>
        <begin position="1853"/>
        <end position="1855"/>
    </location>
</feature>
<feature type="strand" evidence="70">
    <location>
        <begin position="1861"/>
        <end position="1870"/>
    </location>
</feature>
<feature type="strand" evidence="70">
    <location>
        <begin position="1873"/>
        <end position="1877"/>
    </location>
</feature>
<feature type="strand" evidence="70">
    <location>
        <begin position="1881"/>
        <end position="1884"/>
    </location>
</feature>
<feature type="strand" evidence="70">
    <location>
        <begin position="1895"/>
        <end position="1902"/>
    </location>
</feature>
<feature type="strand" evidence="70">
    <location>
        <begin position="1905"/>
        <end position="1911"/>
    </location>
</feature>
<feature type="strand" evidence="70">
    <location>
        <begin position="1922"/>
        <end position="1929"/>
    </location>
</feature>
<feature type="strand" evidence="70">
    <location>
        <begin position="1935"/>
        <end position="1937"/>
    </location>
</feature>
<feature type="strand" evidence="70">
    <location>
        <begin position="1946"/>
        <end position="1962"/>
    </location>
</feature>
<feature type="helix" evidence="70">
    <location>
        <begin position="1963"/>
        <end position="1966"/>
    </location>
</feature>
<feature type="strand" evidence="70">
    <location>
        <begin position="1971"/>
        <end position="1986"/>
    </location>
</feature>
<feature type="strand" evidence="70">
    <location>
        <begin position="1995"/>
        <end position="2000"/>
    </location>
</feature>
<sequence>MASAVSPANLPAVLLQPRWKRVVGWSGPVPRPRHGHRAVAIKELIVVFGGGNEGIVDELHVYNTATNQWFIPAVRGDIPPGCAAYGFVCDGTRLLVFGGMVEYGKYSNDLYELQASRWEWKRLKAKTPKNGPPPCPRLGHSFSLVGNKCYLFGGLANDSEDPKNNIPRYLNDLYILELRPGSGVVAWDIPITYGVLPPPRESHTAVVYTEKDNKKSKLVIYGGMSGCRLGDLWTLDIDTLTWNKPSLSGVAPLPRSLHSATTIGNKMYVFGGWVPLVMDDVKVATHEKEWKCTNTLACLNLDTMAWETILMDTLEDNIPRARAGHCAVAINTRLYIWSGRDGYRKAWNNQVCCKDLWYLETEKPPPPARVQLVRANTNSLEVSWGAVATADSYLLQLQKYDIPATAATATSPTPNPVPSVPANPPKSPAPAAAAPAVQPLTQVGITLLPQAAPAPPTTTTIQVLPTVPGSSISVPTAARTQGVPAVLKVTGPQATTGTPLVTMRPASQAGKAPVTVTSLPAGVRMVVPTQSAQGTVIGSSPQMSGMAALAAAAAATQKIPPSSAPTVLSVPAGTTIVKTMAVTPGTTTLPATVKVASSPVMVSNPATRMLKTAAAQVGTSVSSATNTSTRPIITVHKSGTVTVAQQAQVVTTVVGGVTKTITLVKSPISVPGGSALISNLGKVMSVVQTKPVQTSAVTGQASTGPVTQIIQTKGPLPAGTILKLVTSADGKPTTIITTTQASGAGTKPTILGISSVSPSTTKPGTTTIIKTIPMSAIITQAGATGVTSSPGIKSPITIITTKVMTSGTGAPAKIITAVPKIATGHGQQGVTQVVLKGAPGQPGTILRTVPMGGVRLVTPVTVSAVKPAVTTLVVKGTTGVTTLGTVTGTVSTSLAGAGGHSTSASLATPITTLGTIATLSSQVINPTAITVSAAQTTLTAAGGLTTPTITMQPVSQPTQVTLITAPSGVEAQPVHDLPVSILASPTTEQPTATVTIADSGQGDVQPGTVTLVCSNPPCETHETGTTNTATTTVVANLGGHPQPTQVQFVCDRQEAAASLVTSTVGQQNGSVVRVCSNPPCETHETGTTNTATTATSNMAGQHGCSNPPCETHETGTTNTATTAMSSVGANHQRDARRACAAGTPAVIRISVATGALEAAQGSKSQCQTRQTSATSTTMTVMATGAPCSAGPLLGPSMAREPGGRSPAFVQLAPLSSKVRLSSPSIKDLPAGRHSHAVSTAAMTRSSVGAGEPRMAPVCESLQGGSPSTTVTVTALEALLCPSATVTQVCSNPPCETHETGTTNTATTSNAGSAQRVCSNPPCETHETGTTHTATTATSNGGTGQPEGGQQPPAGRPCETHQTTSTGTTMSVSVGALLPDATSSHRTVESGLEVAAAPSVTPQAGTALLAPFPTQRVCSNPPCETHETGTTHTATTVTSNMSSNQDPPPAASDQGEVESTQGDSVNITSSSAITTTVSSTLTRAVTTVTQSTPVPGPSVPPPEELQVSPGPRQQLPPRQLLQSASTALMGESAEVLSASQTPELPAAVDLSSTGEPSSGQESAGSAVVATVVVQPPPPTQSEVDQLSLPQELMAEAQAGTTTLMVTGLTPEELAVTAAAEAAAQAAATEEAQALAIQAVLQAAQQAVMGTGEPMDTSEAAATVTQAELGHLSAEGQEGQATTIPIVLTQQELAALVQQQQLQEAQAQQQHHHLPTEALAPADSLNDPAIESNCLNELAGTVPSTVALLPSTATESLAPSNTFVAPQPVVVASPAKLQAAATLTEVANGIESLGVKPDLPPPPSKAPMKKENQWFDVGVIKGTNVMVTHYFLPPDDAVPSDDDLGTVPDYNQLKKQELQPGTAYKFRVAGINACGRGPFSEISAFKTCLPGFPGAPCAIKISKSPDGAHLTWEPPSVTSGKIIEYSVYLAIQSSQAGGELKSSTPAQLAFMRVYCGPSPSCLVQSSSLSNAHIDYTTKPAIIFRIAARNEKGYGPATQVRWLQETSKDSSGTKPANKRPMSSPEMKSAPKKSKADGQ</sequence>
<keyword id="KW-0002">3D-structure</keyword>
<keyword id="KW-0007">Acetylation</keyword>
<keyword id="KW-0025">Alternative splicing</keyword>
<keyword id="KW-0068">Autocatalytic cleavage</keyword>
<keyword id="KW-0131">Cell cycle</keyword>
<keyword id="KW-0156">Chromatin regulator</keyword>
<keyword id="KW-0963">Cytoplasm</keyword>
<keyword id="KW-0903">Direct protein sequencing</keyword>
<keyword id="KW-0225">Disease variant</keyword>
<keyword id="KW-0325">Glycoprotein</keyword>
<keyword id="KW-0945">Host-virus interaction</keyword>
<keyword id="KW-0991">Intellectual disability</keyword>
<keyword id="KW-1017">Isopeptide bond</keyword>
<keyword id="KW-0880">Kelch repeat</keyword>
<keyword id="KW-0488">Methylation</keyword>
<keyword id="KW-0539">Nucleus</keyword>
<keyword id="KW-0597">Phosphoprotein</keyword>
<keyword id="KW-1267">Proteomics identification</keyword>
<keyword id="KW-1185">Reference proteome</keyword>
<keyword id="KW-0677">Repeat</keyword>
<keyword id="KW-0832">Ubl conjugation</keyword>
<gene>
    <name evidence="50 55" type="primary">HCFC1</name>
    <name type="synonym">HCF1</name>
    <name type="synonym">HFC1</name>
</gene>